<feature type="initiator methionine" description="Removed">
    <location>
        <position position="1"/>
    </location>
</feature>
<feature type="chain" id="PRO_0000088099" description="Tyrosine-protein kinase Fyn">
    <location>
        <begin position="2"/>
        <end position="537"/>
    </location>
</feature>
<feature type="domain" description="SH3" evidence="6">
    <location>
        <begin position="82"/>
        <end position="143"/>
    </location>
</feature>
<feature type="domain" description="SH2" evidence="5">
    <location>
        <begin position="149"/>
        <end position="246"/>
    </location>
</feature>
<feature type="domain" description="Protein kinase" evidence="4">
    <location>
        <begin position="271"/>
        <end position="524"/>
    </location>
</feature>
<feature type="region of interest" description="Disordered" evidence="8">
    <location>
        <begin position="14"/>
        <end position="35"/>
    </location>
</feature>
<feature type="active site" description="Proton acceptor" evidence="4 7">
    <location>
        <position position="390"/>
    </location>
</feature>
<feature type="binding site" evidence="4">
    <location>
        <begin position="277"/>
        <end position="285"/>
    </location>
    <ligand>
        <name>ATP</name>
        <dbReference type="ChEBI" id="CHEBI:30616"/>
    </ligand>
</feature>
<feature type="binding site" evidence="4">
    <location>
        <position position="299"/>
    </location>
    <ligand>
        <name>ATP</name>
        <dbReference type="ChEBI" id="CHEBI:30616"/>
    </ligand>
</feature>
<feature type="modified residue" description="Phosphothreonine; by PKC" evidence="24">
    <location>
        <position position="12"/>
    </location>
</feature>
<feature type="modified residue" description="Phosphoserine" evidence="55 56 57 58 59 60">
    <location>
        <position position="21"/>
    </location>
</feature>
<feature type="modified residue" description="Phosphoserine" evidence="60">
    <location>
        <position position="26"/>
    </location>
</feature>
<feature type="modified residue" description="Phosphotyrosine" evidence="2">
    <location>
        <position position="185"/>
    </location>
</feature>
<feature type="modified residue" description="Phosphotyrosine; by autocatalysis" evidence="2">
    <location>
        <position position="420"/>
    </location>
</feature>
<feature type="modified residue" description="Phosphotyrosine; by CSK" evidence="29 57">
    <location>
        <position position="531"/>
    </location>
</feature>
<feature type="lipid moiety-binding region" description="N-myristoyl glycine" evidence="29">
    <location>
        <position position="2"/>
    </location>
</feature>
<feature type="lipid moiety-binding region" description="S-palmitoyl cysteine" evidence="1">
    <location>
        <position position="3"/>
    </location>
</feature>
<feature type="lipid moiety-binding region" description="S-palmitoyl cysteine" evidence="1">
    <location>
        <position position="6"/>
    </location>
</feature>
<feature type="splice variant" id="VSP_024108" description="In isoform 3." evidence="51">
    <location>
        <begin position="233"/>
        <end position="287"/>
    </location>
</feature>
<feature type="splice variant" id="VSP_024110" description="In isoform 2." evidence="53">
    <original>RAAGLCCRLVVPCHKGMPRLTDLSVKTKDVWEIPRESLQLIKRLGNGQFGEVWM</original>
    <variation>KADGLCFNLTVIASSCTPQTSGLAKDAWEVARRSLCLEKKLGQGCFAEVWL</variation>
    <location>
        <begin position="234"/>
        <end position="287"/>
    </location>
</feature>
<feature type="sequence variant" id="VAR_041704" description="In a lung squamous cell carcinoma sample; somatic mutation." evidence="31">
    <original>V</original>
    <variation>L</variation>
    <location>
        <position position="243"/>
    </location>
</feature>
<feature type="sequence variant" id="VAR_041705" description="In a metastatic melanoma sample; somatic mutation." evidence="31">
    <original>G</original>
    <variation>R</variation>
    <location>
        <position position="410"/>
    </location>
</feature>
<feature type="sequence variant" id="VAR_014661" description="In dbSNP:rs1801121.">
    <original>I</original>
    <variation>F</variation>
    <location>
        <position position="445"/>
    </location>
</feature>
<feature type="sequence variant" id="VAR_041706" description="In dbSNP:rs28763975." evidence="31">
    <original>D</original>
    <variation>E</variation>
    <location>
        <position position="506"/>
    </location>
</feature>
<feature type="sequence conflict" description="In Ref. 1; AAA36615." evidence="54" ref="1">
    <original>A</original>
    <variation>S</variation>
    <location>
        <position position="184"/>
    </location>
</feature>
<feature type="sequence conflict" description="In Ref. 1; AAA36615 and 3; AAB33113." evidence="54" ref="1 3">
    <original>A</original>
    <variation>R</variation>
    <location>
        <position position="437"/>
    </location>
</feature>
<feature type="strand" evidence="66">
    <location>
        <begin position="87"/>
        <end position="91"/>
    </location>
</feature>
<feature type="strand" evidence="66">
    <location>
        <begin position="97"/>
        <end position="100"/>
    </location>
</feature>
<feature type="strand" evidence="66">
    <location>
        <begin position="108"/>
        <end position="113"/>
    </location>
</feature>
<feature type="strand" evidence="66">
    <location>
        <begin position="115"/>
        <end position="124"/>
    </location>
</feature>
<feature type="turn" evidence="66">
    <location>
        <begin position="125"/>
        <end position="127"/>
    </location>
</feature>
<feature type="strand" evidence="66">
    <location>
        <begin position="130"/>
        <end position="134"/>
    </location>
</feature>
<feature type="helix" evidence="66">
    <location>
        <begin position="135"/>
        <end position="137"/>
    </location>
</feature>
<feature type="strand" evidence="66">
    <location>
        <begin position="138"/>
        <end position="140"/>
    </location>
</feature>
<feature type="helix" evidence="65">
    <location>
        <begin position="141"/>
        <end position="143"/>
    </location>
</feature>
<feature type="helix" evidence="62">
    <location>
        <begin position="144"/>
        <end position="146"/>
    </location>
</feature>
<feature type="strand" evidence="62">
    <location>
        <begin position="147"/>
        <end position="150"/>
    </location>
</feature>
<feature type="helix" evidence="64">
    <location>
        <begin position="156"/>
        <end position="163"/>
    </location>
</feature>
<feature type="turn" evidence="61">
    <location>
        <begin position="165"/>
        <end position="167"/>
    </location>
</feature>
<feature type="strand" evidence="64">
    <location>
        <begin position="172"/>
        <end position="177"/>
    </location>
</feature>
<feature type="strand" evidence="64">
    <location>
        <begin position="179"/>
        <end position="181"/>
    </location>
</feature>
<feature type="strand" evidence="64">
    <location>
        <begin position="185"/>
        <end position="193"/>
    </location>
</feature>
<feature type="turn" evidence="64">
    <location>
        <begin position="194"/>
        <end position="196"/>
    </location>
</feature>
<feature type="strand" evidence="64">
    <location>
        <begin position="197"/>
        <end position="207"/>
    </location>
</feature>
<feature type="turn" evidence="61">
    <location>
        <begin position="209"/>
        <end position="211"/>
    </location>
</feature>
<feature type="strand" evidence="64">
    <location>
        <begin position="213"/>
        <end position="216"/>
    </location>
</feature>
<feature type="strand" evidence="64">
    <location>
        <begin position="219"/>
        <end position="223"/>
    </location>
</feature>
<feature type="helix" evidence="64">
    <location>
        <begin position="224"/>
        <end position="233"/>
    </location>
</feature>
<feature type="strand" evidence="64">
    <location>
        <begin position="238"/>
        <end position="240"/>
    </location>
</feature>
<feature type="strand" evidence="63">
    <location>
        <begin position="263"/>
        <end position="265"/>
    </location>
</feature>
<feature type="helix" evidence="63">
    <location>
        <begin position="268"/>
        <end position="270"/>
    </location>
</feature>
<feature type="strand" evidence="63">
    <location>
        <begin position="271"/>
        <end position="278"/>
    </location>
</feature>
<feature type="strand" evidence="63">
    <location>
        <begin position="285"/>
        <end position="290"/>
    </location>
</feature>
<feature type="turn" evidence="63">
    <location>
        <begin position="291"/>
        <end position="293"/>
    </location>
</feature>
<feature type="strand" evidence="63">
    <location>
        <begin position="294"/>
        <end position="299"/>
    </location>
</feature>
<feature type="turn" evidence="63">
    <location>
        <begin position="303"/>
        <end position="305"/>
    </location>
</feature>
<feature type="helix" evidence="63">
    <location>
        <begin position="308"/>
        <end position="318"/>
    </location>
</feature>
<feature type="strand" evidence="63">
    <location>
        <begin position="329"/>
        <end position="333"/>
    </location>
</feature>
<feature type="strand" evidence="63">
    <location>
        <begin position="335"/>
        <end position="337"/>
    </location>
</feature>
<feature type="strand" evidence="63">
    <location>
        <begin position="339"/>
        <end position="343"/>
    </location>
</feature>
<feature type="helix" evidence="63">
    <location>
        <begin position="350"/>
        <end position="354"/>
    </location>
</feature>
<feature type="strand" evidence="63">
    <location>
        <begin position="355"/>
        <end position="357"/>
    </location>
</feature>
<feature type="turn" evidence="63">
    <location>
        <begin position="358"/>
        <end position="360"/>
    </location>
</feature>
<feature type="helix" evidence="63">
    <location>
        <begin position="364"/>
        <end position="383"/>
    </location>
</feature>
<feature type="helix" evidence="63">
    <location>
        <begin position="393"/>
        <end position="395"/>
    </location>
</feature>
<feature type="strand" evidence="63">
    <location>
        <begin position="396"/>
        <end position="399"/>
    </location>
</feature>
<feature type="turn" evidence="63">
    <location>
        <begin position="400"/>
        <end position="402"/>
    </location>
</feature>
<feature type="strand" evidence="63">
    <location>
        <begin position="403"/>
        <end position="406"/>
    </location>
</feature>
<feature type="strand" evidence="63">
    <location>
        <begin position="416"/>
        <end position="418"/>
    </location>
</feature>
<feature type="turn" evidence="63">
    <location>
        <begin position="430"/>
        <end position="432"/>
    </location>
</feature>
<feature type="helix" evidence="63">
    <location>
        <begin position="435"/>
        <end position="438"/>
    </location>
</feature>
<feature type="helix" evidence="63">
    <location>
        <begin position="445"/>
        <end position="460"/>
    </location>
</feature>
<feature type="helix" evidence="63">
    <location>
        <begin position="472"/>
        <end position="481"/>
    </location>
</feature>
<feature type="helix" evidence="63">
    <location>
        <begin position="496"/>
        <end position="502"/>
    </location>
</feature>
<feature type="helix" evidence="63">
    <location>
        <begin position="507"/>
        <end position="509"/>
    </location>
</feature>
<feature type="helix" evidence="63">
    <location>
        <begin position="513"/>
        <end position="521"/>
    </location>
</feature>
<dbReference type="EC" id="2.7.10.2" evidence="12 13 18 19 21 42"/>
<dbReference type="EMBL" id="M14676">
    <property type="protein sequence ID" value="AAA36615.1"/>
    <property type="molecule type" value="mRNA"/>
</dbReference>
<dbReference type="EMBL" id="M14333">
    <property type="protein sequence ID" value="AAC08285.1"/>
    <property type="molecule type" value="mRNA"/>
</dbReference>
<dbReference type="EMBL" id="S74774">
    <property type="protein sequence ID" value="AAB33113.2"/>
    <property type="molecule type" value="mRNA"/>
</dbReference>
<dbReference type="EMBL" id="AB451293">
    <property type="protein sequence ID" value="BAG70107.1"/>
    <property type="molecule type" value="mRNA"/>
</dbReference>
<dbReference type="EMBL" id="AB451426">
    <property type="protein sequence ID" value="BAG70240.1"/>
    <property type="molecule type" value="mRNA"/>
</dbReference>
<dbReference type="EMBL" id="Z97989">
    <property type="status" value="NOT_ANNOTATED_CDS"/>
    <property type="molecule type" value="Genomic_DNA"/>
</dbReference>
<dbReference type="EMBL" id="CH471051">
    <property type="protein sequence ID" value="EAW48278.1"/>
    <property type="molecule type" value="Genomic_DNA"/>
</dbReference>
<dbReference type="EMBL" id="CH471051">
    <property type="protein sequence ID" value="EAW48279.1"/>
    <property type="molecule type" value="Genomic_DNA"/>
</dbReference>
<dbReference type="EMBL" id="CH471051">
    <property type="protein sequence ID" value="EAW48281.1"/>
    <property type="molecule type" value="Genomic_DNA"/>
</dbReference>
<dbReference type="EMBL" id="CH471051">
    <property type="protein sequence ID" value="EAW48282.1"/>
    <property type="molecule type" value="Genomic_DNA"/>
</dbReference>
<dbReference type="EMBL" id="CH471051">
    <property type="protein sequence ID" value="EAW48283.1"/>
    <property type="molecule type" value="Genomic_DNA"/>
</dbReference>
<dbReference type="EMBL" id="BC032496">
    <property type="protein sequence ID" value="AAH32496.1"/>
    <property type="molecule type" value="mRNA"/>
</dbReference>
<dbReference type="CCDS" id="CCDS5094.1">
    <molecule id="P06241-1"/>
</dbReference>
<dbReference type="CCDS" id="CCDS5095.1">
    <molecule id="P06241-2"/>
</dbReference>
<dbReference type="CCDS" id="CCDS5096.1">
    <molecule id="P06241-3"/>
</dbReference>
<dbReference type="PIR" id="A24314">
    <property type="entry name" value="TVHUSY"/>
</dbReference>
<dbReference type="RefSeq" id="NP_001357458.1">
    <molecule id="P06241-1"/>
    <property type="nucleotide sequence ID" value="NM_001370529.1"/>
</dbReference>
<dbReference type="RefSeq" id="NP_002028.1">
    <molecule id="P06241-1"/>
    <property type="nucleotide sequence ID" value="NM_002037.5"/>
</dbReference>
<dbReference type="RefSeq" id="NP_694592.1">
    <molecule id="P06241-2"/>
    <property type="nucleotide sequence ID" value="NM_153047.4"/>
</dbReference>
<dbReference type="RefSeq" id="NP_694593.1">
    <molecule id="P06241-3"/>
    <property type="nucleotide sequence ID" value="NM_153048.4"/>
</dbReference>
<dbReference type="RefSeq" id="XP_005266947.1">
    <property type="nucleotide sequence ID" value="XM_005266890.3"/>
</dbReference>
<dbReference type="RefSeq" id="XP_005266949.1">
    <molecule id="P06241-3"/>
    <property type="nucleotide sequence ID" value="XM_005266892.5"/>
</dbReference>
<dbReference type="RefSeq" id="XP_016866139.1">
    <molecule id="P06241-1"/>
    <property type="nucleotide sequence ID" value="XM_017010650.2"/>
</dbReference>
<dbReference type="RefSeq" id="XP_016866140.1">
    <molecule id="P06241-1"/>
    <property type="nucleotide sequence ID" value="XM_017010651.2"/>
</dbReference>
<dbReference type="RefSeq" id="XP_016866141.1">
    <molecule id="P06241-1"/>
    <property type="nucleotide sequence ID" value="XM_017010652.2"/>
</dbReference>
<dbReference type="RefSeq" id="XP_016866142.1">
    <molecule id="P06241-1"/>
    <property type="nucleotide sequence ID" value="XM_017010653.2"/>
</dbReference>
<dbReference type="RefSeq" id="XP_016866143.1">
    <property type="nucleotide sequence ID" value="XM_017010654.1"/>
</dbReference>
<dbReference type="RefSeq" id="XP_047274517.1">
    <molecule id="P06241-1"/>
    <property type="nucleotide sequence ID" value="XM_047418561.1"/>
</dbReference>
<dbReference type="RefSeq" id="XP_047274518.1">
    <molecule id="P06241-1"/>
    <property type="nucleotide sequence ID" value="XM_047418562.1"/>
</dbReference>
<dbReference type="RefSeq" id="XP_047274519.1">
    <molecule id="P06241-1"/>
    <property type="nucleotide sequence ID" value="XM_047418563.1"/>
</dbReference>
<dbReference type="RefSeq" id="XP_047274521.1">
    <molecule id="P06241-1"/>
    <property type="nucleotide sequence ID" value="XM_047418565.1"/>
</dbReference>
<dbReference type="RefSeq" id="XP_047274522.1">
    <molecule id="P06241-1"/>
    <property type="nucleotide sequence ID" value="XM_047418566.1"/>
</dbReference>
<dbReference type="RefSeq" id="XP_047274523.1">
    <molecule id="P06241-1"/>
    <property type="nucleotide sequence ID" value="XM_047418567.1"/>
</dbReference>
<dbReference type="RefSeq" id="XP_047274524.1">
    <molecule id="P06241-2"/>
    <property type="nucleotide sequence ID" value="XM_047418568.1"/>
</dbReference>
<dbReference type="RefSeq" id="XP_047274525.1">
    <molecule id="P06241-2"/>
    <property type="nucleotide sequence ID" value="XM_047418569.1"/>
</dbReference>
<dbReference type="RefSeq" id="XP_047274526.1">
    <molecule id="P06241-2"/>
    <property type="nucleotide sequence ID" value="XM_047418570.1"/>
</dbReference>
<dbReference type="RefSeq" id="XP_047274527.1">
    <molecule id="P06241-2"/>
    <property type="nucleotide sequence ID" value="XM_047418571.1"/>
</dbReference>
<dbReference type="RefSeq" id="XP_047274528.1">
    <molecule id="P06241-3"/>
    <property type="nucleotide sequence ID" value="XM_047418572.1"/>
</dbReference>
<dbReference type="RefSeq" id="XP_054210977.1">
    <molecule id="P06241-1"/>
    <property type="nucleotide sequence ID" value="XM_054355002.1"/>
</dbReference>
<dbReference type="RefSeq" id="XP_054210978.1">
    <molecule id="P06241-1"/>
    <property type="nucleotide sequence ID" value="XM_054355003.1"/>
</dbReference>
<dbReference type="RefSeq" id="XP_054210979.1">
    <molecule id="P06241-1"/>
    <property type="nucleotide sequence ID" value="XM_054355004.1"/>
</dbReference>
<dbReference type="RefSeq" id="XP_054210980.1">
    <molecule id="P06241-1"/>
    <property type="nucleotide sequence ID" value="XM_054355005.1"/>
</dbReference>
<dbReference type="RefSeq" id="XP_054210981.1">
    <molecule id="P06241-1"/>
    <property type="nucleotide sequence ID" value="XM_054355006.1"/>
</dbReference>
<dbReference type="RefSeq" id="XP_054210982.1">
    <molecule id="P06241-1"/>
    <property type="nucleotide sequence ID" value="XM_054355007.1"/>
</dbReference>
<dbReference type="RefSeq" id="XP_054210983.1">
    <molecule id="P06241-1"/>
    <property type="nucleotide sequence ID" value="XM_054355008.1"/>
</dbReference>
<dbReference type="RefSeq" id="XP_054210984.1">
    <molecule id="P06241-1"/>
    <property type="nucleotide sequence ID" value="XM_054355009.1"/>
</dbReference>
<dbReference type="RefSeq" id="XP_054210985.1">
    <molecule id="P06241-1"/>
    <property type="nucleotide sequence ID" value="XM_054355010.1"/>
</dbReference>
<dbReference type="RefSeq" id="XP_054210986.1">
    <molecule id="P06241-2"/>
    <property type="nucleotide sequence ID" value="XM_054355011.1"/>
</dbReference>
<dbReference type="RefSeq" id="XP_054210987.1">
    <molecule id="P06241-2"/>
    <property type="nucleotide sequence ID" value="XM_054355012.1"/>
</dbReference>
<dbReference type="RefSeq" id="XP_054210988.1">
    <molecule id="P06241-2"/>
    <property type="nucleotide sequence ID" value="XM_054355013.1"/>
</dbReference>
<dbReference type="RefSeq" id="XP_054210989.1">
    <molecule id="P06241-2"/>
    <property type="nucleotide sequence ID" value="XM_054355014.1"/>
</dbReference>
<dbReference type="RefSeq" id="XP_054210990.1">
    <molecule id="P06241-3"/>
    <property type="nucleotide sequence ID" value="XM_054355015.1"/>
</dbReference>
<dbReference type="RefSeq" id="XP_054210991.1">
    <molecule id="P06241-3"/>
    <property type="nucleotide sequence ID" value="XM_054355016.1"/>
</dbReference>
<dbReference type="PDB" id="1A0N">
    <property type="method" value="NMR"/>
    <property type="chains" value="B=80-148"/>
</dbReference>
<dbReference type="PDB" id="1AOT">
    <property type="method" value="NMR"/>
    <property type="chains" value="F=143-248"/>
</dbReference>
<dbReference type="PDB" id="1AOU">
    <property type="method" value="NMR"/>
    <property type="chains" value="F=143-248"/>
</dbReference>
<dbReference type="PDB" id="1AVZ">
    <property type="method" value="X-ray"/>
    <property type="resolution" value="3.00 A"/>
    <property type="chains" value="C=85-141"/>
</dbReference>
<dbReference type="PDB" id="1AZG">
    <property type="method" value="NMR"/>
    <property type="chains" value="B=82-148"/>
</dbReference>
<dbReference type="PDB" id="1EFN">
    <property type="method" value="X-ray"/>
    <property type="resolution" value="2.50 A"/>
    <property type="chains" value="A/C=86-143"/>
</dbReference>
<dbReference type="PDB" id="1FYN">
    <property type="method" value="X-ray"/>
    <property type="resolution" value="2.30 A"/>
    <property type="chains" value="A=81-142"/>
</dbReference>
<dbReference type="PDB" id="1G83">
    <property type="method" value="X-ray"/>
    <property type="resolution" value="2.60 A"/>
    <property type="chains" value="A/B=82-246"/>
</dbReference>
<dbReference type="PDB" id="1M27">
    <property type="method" value="X-ray"/>
    <property type="resolution" value="2.50 A"/>
    <property type="chains" value="C=84-144"/>
</dbReference>
<dbReference type="PDB" id="1NYF">
    <property type="method" value="NMR"/>
    <property type="chains" value="A=82-148"/>
</dbReference>
<dbReference type="PDB" id="1NYG">
    <property type="method" value="NMR"/>
    <property type="chains" value="A=82-148"/>
</dbReference>
<dbReference type="PDB" id="1SHF">
    <property type="method" value="X-ray"/>
    <property type="resolution" value="1.90 A"/>
    <property type="chains" value="A/B=84-142"/>
</dbReference>
<dbReference type="PDB" id="1ZBJ">
    <property type="method" value="NMR"/>
    <property type="chains" value="A=84-142"/>
</dbReference>
<dbReference type="PDB" id="2DQ7">
    <property type="method" value="X-ray"/>
    <property type="resolution" value="2.80 A"/>
    <property type="chains" value="X=261-537"/>
</dbReference>
<dbReference type="PDB" id="2MQI">
    <property type="method" value="NMR"/>
    <property type="chains" value="A=148-248"/>
</dbReference>
<dbReference type="PDB" id="2MRJ">
    <property type="method" value="NMR"/>
    <property type="chains" value="A=148-248"/>
</dbReference>
<dbReference type="PDB" id="2MRK">
    <property type="method" value="NMR"/>
    <property type="chains" value="A=149-248, B=528-537"/>
</dbReference>
<dbReference type="PDB" id="3H0F">
    <property type="method" value="X-ray"/>
    <property type="resolution" value="2.61 A"/>
    <property type="chains" value="A=73-142"/>
</dbReference>
<dbReference type="PDB" id="3H0H">
    <property type="method" value="X-ray"/>
    <property type="resolution" value="1.76 A"/>
    <property type="chains" value="A=73-142"/>
</dbReference>
<dbReference type="PDB" id="3H0I">
    <property type="method" value="X-ray"/>
    <property type="resolution" value="2.20 A"/>
    <property type="chains" value="A/B=73-142"/>
</dbReference>
<dbReference type="PDB" id="3UA6">
    <property type="method" value="X-ray"/>
    <property type="resolution" value="1.85 A"/>
    <property type="chains" value="A/B=81-143"/>
</dbReference>
<dbReference type="PDB" id="3UA7">
    <property type="method" value="X-ray"/>
    <property type="resolution" value="1.50 A"/>
    <property type="chains" value="A/B/C/D=81-143"/>
</dbReference>
<dbReference type="PDB" id="4D8D">
    <property type="method" value="X-ray"/>
    <property type="resolution" value="2.52 A"/>
    <property type="chains" value="A/C=84-141"/>
</dbReference>
<dbReference type="PDB" id="4EIK">
    <property type="method" value="X-ray"/>
    <property type="resolution" value="1.60 A"/>
    <property type="chains" value="A=81-143"/>
</dbReference>
<dbReference type="PDB" id="4U17">
    <property type="method" value="X-ray"/>
    <property type="resolution" value="1.99 A"/>
    <property type="chains" value="A/B/C=148-248"/>
</dbReference>
<dbReference type="PDB" id="4U1P">
    <property type="method" value="X-ray"/>
    <property type="resolution" value="1.40 A"/>
    <property type="chains" value="A=148-248"/>
</dbReference>
<dbReference type="PDB" id="4ZNX">
    <property type="method" value="X-ray"/>
    <property type="resolution" value="2.10 A"/>
    <property type="chains" value="A/B/C/D=84-141"/>
</dbReference>
<dbReference type="PDB" id="5ZAU">
    <property type="method" value="NMR"/>
    <property type="chains" value="A=85-141"/>
</dbReference>
<dbReference type="PDB" id="6EDF">
    <property type="method" value="X-ray"/>
    <property type="resolution" value="1.40 A"/>
    <property type="chains" value="A=83-146"/>
</dbReference>
<dbReference type="PDB" id="6IPY">
    <property type="method" value="X-ray"/>
    <property type="resolution" value="1.34 A"/>
    <property type="chains" value="A=82-144"/>
</dbReference>
<dbReference type="PDB" id="6IPZ">
    <property type="method" value="X-ray"/>
    <property type="resolution" value="1.58 A"/>
    <property type="chains" value="Z=82-144"/>
</dbReference>
<dbReference type="PDB" id="7A2J">
    <property type="method" value="X-ray"/>
    <property type="resolution" value="1.50 A"/>
    <property type="chains" value="A/B=83-142"/>
</dbReference>
<dbReference type="PDB" id="7A2K">
    <property type="method" value="X-ray"/>
    <property type="resolution" value="1.50 A"/>
    <property type="chains" value="A/B/C/D=83-142"/>
</dbReference>
<dbReference type="PDB" id="7A2L">
    <property type="method" value="X-ray"/>
    <property type="resolution" value="1.90 A"/>
    <property type="chains" value="A/B=83-142"/>
</dbReference>
<dbReference type="PDB" id="7A2M">
    <property type="method" value="X-ray"/>
    <property type="resolution" value="1.50 A"/>
    <property type="chains" value="A/B=83-142"/>
</dbReference>
<dbReference type="PDB" id="7A2N">
    <property type="method" value="X-ray"/>
    <property type="resolution" value="1.40 A"/>
    <property type="chains" value="A/B/C/D=83-142"/>
</dbReference>
<dbReference type="PDB" id="7A2O">
    <property type="method" value="X-ray"/>
    <property type="resolution" value="0.94 A"/>
    <property type="chains" value="A=83-142"/>
</dbReference>
<dbReference type="PDB" id="7A2P">
    <property type="method" value="X-ray"/>
    <property type="resolution" value="0.90 A"/>
    <property type="chains" value="A=83-143"/>
</dbReference>
<dbReference type="PDB" id="7A2Q">
    <property type="method" value="X-ray"/>
    <property type="resolution" value="0.94 A"/>
    <property type="chains" value="A=83-143"/>
</dbReference>
<dbReference type="PDB" id="7A2R">
    <property type="method" value="X-ray"/>
    <property type="resolution" value="1.05 A"/>
    <property type="chains" value="A=83-143"/>
</dbReference>
<dbReference type="PDB" id="7A2S">
    <property type="method" value="X-ray"/>
    <property type="resolution" value="1.02 A"/>
    <property type="chains" value="A=83-143"/>
</dbReference>
<dbReference type="PDB" id="7A2T">
    <property type="method" value="X-ray"/>
    <property type="resolution" value="1.22 A"/>
    <property type="chains" value="A=83-143"/>
</dbReference>
<dbReference type="PDB" id="7A2U">
    <property type="method" value="X-ray"/>
    <property type="resolution" value="1.70 A"/>
    <property type="chains" value="A=83-142"/>
</dbReference>
<dbReference type="PDB" id="7A2V">
    <property type="method" value="X-ray"/>
    <property type="resolution" value="1.81 A"/>
    <property type="chains" value="A=83-142"/>
</dbReference>
<dbReference type="PDB" id="7A2W">
    <property type="method" value="X-ray"/>
    <property type="resolution" value="0.99 A"/>
    <property type="chains" value="A=83-142"/>
</dbReference>
<dbReference type="PDB" id="7A2X">
    <property type="method" value="X-ray"/>
    <property type="resolution" value="0.92 A"/>
    <property type="chains" value="A=83-142"/>
</dbReference>
<dbReference type="PDB" id="7A2Y">
    <property type="method" value="X-ray"/>
    <property type="resolution" value="0.97 A"/>
    <property type="chains" value="A=83-142"/>
</dbReference>
<dbReference type="PDB" id="7A2Z">
    <property type="method" value="X-ray"/>
    <property type="resolution" value="1.14 A"/>
    <property type="chains" value="A=83-142"/>
</dbReference>
<dbReference type="PDB" id="7UD6">
    <property type="method" value="X-ray"/>
    <property type="resolution" value="2.59 A"/>
    <property type="chains" value="A=86-141"/>
</dbReference>
<dbReference type="PDB" id="8KDX">
    <property type="method" value="X-ray"/>
    <property type="resolution" value="1.01 A"/>
    <property type="chains" value="A=85-142"/>
</dbReference>
<dbReference type="PDBsum" id="1A0N"/>
<dbReference type="PDBsum" id="1AOT"/>
<dbReference type="PDBsum" id="1AOU"/>
<dbReference type="PDBsum" id="1AVZ"/>
<dbReference type="PDBsum" id="1AZG"/>
<dbReference type="PDBsum" id="1EFN"/>
<dbReference type="PDBsum" id="1FYN"/>
<dbReference type="PDBsum" id="1G83"/>
<dbReference type="PDBsum" id="1M27"/>
<dbReference type="PDBsum" id="1NYF"/>
<dbReference type="PDBsum" id="1NYG"/>
<dbReference type="PDBsum" id="1SHF"/>
<dbReference type="PDBsum" id="1ZBJ"/>
<dbReference type="PDBsum" id="2DQ7"/>
<dbReference type="PDBsum" id="2MQI"/>
<dbReference type="PDBsum" id="2MRJ"/>
<dbReference type="PDBsum" id="2MRK"/>
<dbReference type="PDBsum" id="3H0F"/>
<dbReference type="PDBsum" id="3H0H"/>
<dbReference type="PDBsum" id="3H0I"/>
<dbReference type="PDBsum" id="3UA6"/>
<dbReference type="PDBsum" id="3UA7"/>
<dbReference type="PDBsum" id="4D8D"/>
<dbReference type="PDBsum" id="4EIK"/>
<dbReference type="PDBsum" id="4U17"/>
<dbReference type="PDBsum" id="4U1P"/>
<dbReference type="PDBsum" id="4ZNX"/>
<dbReference type="PDBsum" id="5ZAU"/>
<dbReference type="PDBsum" id="6EDF"/>
<dbReference type="PDBsum" id="6IPY"/>
<dbReference type="PDBsum" id="6IPZ"/>
<dbReference type="PDBsum" id="7A2J"/>
<dbReference type="PDBsum" id="7A2K"/>
<dbReference type="PDBsum" id="7A2L"/>
<dbReference type="PDBsum" id="7A2M"/>
<dbReference type="PDBsum" id="7A2N"/>
<dbReference type="PDBsum" id="7A2O"/>
<dbReference type="PDBsum" id="7A2P"/>
<dbReference type="PDBsum" id="7A2Q"/>
<dbReference type="PDBsum" id="7A2R"/>
<dbReference type="PDBsum" id="7A2S"/>
<dbReference type="PDBsum" id="7A2T"/>
<dbReference type="PDBsum" id="7A2U"/>
<dbReference type="PDBsum" id="7A2V"/>
<dbReference type="PDBsum" id="7A2W"/>
<dbReference type="PDBsum" id="7A2X"/>
<dbReference type="PDBsum" id="7A2Y"/>
<dbReference type="PDBsum" id="7A2Z"/>
<dbReference type="PDBsum" id="7UD6"/>
<dbReference type="PDBsum" id="8KDX"/>
<dbReference type="BMRB" id="P06241"/>
<dbReference type="SMR" id="P06241"/>
<dbReference type="BioGRID" id="108810">
    <property type="interactions" value="445"/>
</dbReference>
<dbReference type="CORUM" id="P06241"/>
<dbReference type="DIP" id="DIP-33876N"/>
<dbReference type="ELM" id="P06241"/>
<dbReference type="FunCoup" id="P06241">
    <property type="interactions" value="1969"/>
</dbReference>
<dbReference type="IntAct" id="P06241">
    <property type="interactions" value="493"/>
</dbReference>
<dbReference type="MINT" id="P06241"/>
<dbReference type="STRING" id="9606.ENSP00000346671"/>
<dbReference type="BindingDB" id="P06241"/>
<dbReference type="ChEMBL" id="CHEMBL1841"/>
<dbReference type="DrugBank" id="DB01254">
    <property type="generic name" value="Dasatinib"/>
</dbReference>
<dbReference type="DrugBank" id="DB12010">
    <property type="generic name" value="Fostamatinib"/>
</dbReference>
<dbReference type="DrugBank" id="DB02078">
    <property type="generic name" value="Triglyme"/>
</dbReference>
<dbReference type="DrugBank" id="DB16656">
    <property type="generic name" value="Zotiraciclib"/>
</dbReference>
<dbReference type="DrugCentral" id="P06241"/>
<dbReference type="GuidetoPHARMACOLOGY" id="2026"/>
<dbReference type="MoonDB" id="P06241">
    <property type="type" value="Predicted"/>
</dbReference>
<dbReference type="GlyGen" id="P06241">
    <property type="glycosylation" value="1 site, 1 O-linked glycan (1 site)"/>
</dbReference>
<dbReference type="iPTMnet" id="P06241"/>
<dbReference type="PhosphoSitePlus" id="P06241"/>
<dbReference type="SwissPalm" id="P06241"/>
<dbReference type="BioMuta" id="FYN"/>
<dbReference type="DMDM" id="125370"/>
<dbReference type="CPTAC" id="CPTAC-1792"/>
<dbReference type="jPOST" id="P06241"/>
<dbReference type="MassIVE" id="P06241"/>
<dbReference type="PaxDb" id="9606-ENSP00000346671"/>
<dbReference type="PeptideAtlas" id="P06241"/>
<dbReference type="ProteomicsDB" id="51877">
    <molecule id="P06241-1"/>
</dbReference>
<dbReference type="ProteomicsDB" id="51878">
    <molecule id="P06241-2"/>
</dbReference>
<dbReference type="ProteomicsDB" id="51879">
    <molecule id="P06241-3"/>
</dbReference>
<dbReference type="Pumba" id="P06241"/>
<dbReference type="ABCD" id="P06241">
    <property type="antibodies" value="2 sequenced antibodies"/>
</dbReference>
<dbReference type="Antibodypedia" id="3559">
    <property type="antibodies" value="1037 antibodies from 46 providers"/>
</dbReference>
<dbReference type="DNASU" id="2534"/>
<dbReference type="Ensembl" id="ENST00000229471.8">
    <molecule id="P06241-3"/>
    <property type="protein sequence ID" value="ENSP00000229471.4"/>
    <property type="gene ID" value="ENSG00000010810.18"/>
</dbReference>
<dbReference type="Ensembl" id="ENST00000354650.7">
    <molecule id="P06241-1"/>
    <property type="protein sequence ID" value="ENSP00000346671.3"/>
    <property type="gene ID" value="ENSG00000010810.18"/>
</dbReference>
<dbReference type="Ensembl" id="ENST00000368667.6">
    <molecule id="P06241-1"/>
    <property type="protein sequence ID" value="ENSP00000357656.2"/>
    <property type="gene ID" value="ENSG00000010810.18"/>
</dbReference>
<dbReference type="Ensembl" id="ENST00000368678.8">
    <molecule id="P06241-2"/>
    <property type="protein sequence ID" value="ENSP00000357667.4"/>
    <property type="gene ID" value="ENSG00000010810.18"/>
</dbReference>
<dbReference type="Ensembl" id="ENST00000368682.8">
    <molecule id="P06241-2"/>
    <property type="protein sequence ID" value="ENSP00000357671.3"/>
    <property type="gene ID" value="ENSG00000010810.18"/>
</dbReference>
<dbReference type="GeneID" id="2534"/>
<dbReference type="KEGG" id="hsa:2534"/>
<dbReference type="MANE-Select" id="ENST00000354650.7">
    <property type="protein sequence ID" value="ENSP00000346671.3"/>
    <property type="RefSeq nucleotide sequence ID" value="NM_002037.5"/>
    <property type="RefSeq protein sequence ID" value="NP_002028.1"/>
</dbReference>
<dbReference type="UCSC" id="uc003pvh.3">
    <molecule id="P06241-1"/>
    <property type="organism name" value="human"/>
</dbReference>
<dbReference type="AGR" id="HGNC:4037"/>
<dbReference type="CTD" id="2534"/>
<dbReference type="DisGeNET" id="2534"/>
<dbReference type="GeneCards" id="FYN"/>
<dbReference type="HGNC" id="HGNC:4037">
    <property type="gene designation" value="FYN"/>
</dbReference>
<dbReference type="HPA" id="ENSG00000010810">
    <property type="expression patterns" value="Low tissue specificity"/>
</dbReference>
<dbReference type="MIM" id="137025">
    <property type="type" value="gene"/>
</dbReference>
<dbReference type="neXtProt" id="NX_P06241"/>
<dbReference type="OpenTargets" id="ENSG00000010810"/>
<dbReference type="PharmGKB" id="PA28454"/>
<dbReference type="VEuPathDB" id="HostDB:ENSG00000010810"/>
<dbReference type="eggNOG" id="KOG0197">
    <property type="taxonomic scope" value="Eukaryota"/>
</dbReference>
<dbReference type="GeneTree" id="ENSGT00940000155462"/>
<dbReference type="HOGENOM" id="CLU_000288_7_2_1"/>
<dbReference type="InParanoid" id="P06241"/>
<dbReference type="OMA" id="XWYFGKL"/>
<dbReference type="OrthoDB" id="4062651at2759"/>
<dbReference type="PAN-GO" id="P06241">
    <property type="GO annotations" value="7 GO annotations based on evolutionary models"/>
</dbReference>
<dbReference type="PhylomeDB" id="P06241"/>
<dbReference type="TreeFam" id="TF351634"/>
<dbReference type="BRENDA" id="2.7.10.2">
    <property type="organism ID" value="2681"/>
</dbReference>
<dbReference type="PathwayCommons" id="P06241"/>
<dbReference type="Reactome" id="R-HSA-114604">
    <property type="pathway name" value="GPVI-mediated activation cascade"/>
</dbReference>
<dbReference type="Reactome" id="R-HSA-1227986">
    <property type="pathway name" value="Signaling by ERBB2"/>
</dbReference>
<dbReference type="Reactome" id="R-HSA-1257604">
    <property type="pathway name" value="PIP3 activates AKT signaling"/>
</dbReference>
<dbReference type="Reactome" id="R-HSA-1433557">
    <property type="pathway name" value="Signaling by SCF-KIT"/>
</dbReference>
<dbReference type="Reactome" id="R-HSA-1433559">
    <property type="pathway name" value="Regulation of KIT signaling"/>
</dbReference>
<dbReference type="Reactome" id="R-HSA-164944">
    <property type="pathway name" value="Nef and signal transduction"/>
</dbReference>
<dbReference type="Reactome" id="R-HSA-202733">
    <property type="pathway name" value="Cell surface interactions at the vascular wall"/>
</dbReference>
<dbReference type="Reactome" id="R-HSA-2029481">
    <property type="pathway name" value="FCGR activation"/>
</dbReference>
<dbReference type="Reactome" id="R-HSA-210990">
    <property type="pathway name" value="PECAM1 interactions"/>
</dbReference>
<dbReference type="Reactome" id="R-HSA-2219530">
    <property type="pathway name" value="Constitutive Signaling by Aberrant PI3K in Cancer"/>
</dbReference>
<dbReference type="Reactome" id="R-HSA-2424491">
    <property type="pathway name" value="DAP12 signaling"/>
</dbReference>
<dbReference type="Reactome" id="R-HSA-2682334">
    <property type="pathway name" value="EPH-Ephrin signaling"/>
</dbReference>
<dbReference type="Reactome" id="R-HSA-2730905">
    <property type="pathway name" value="Role of LAT2/NTAL/LAB on calcium mobilization"/>
</dbReference>
<dbReference type="Reactome" id="R-HSA-373753">
    <property type="pathway name" value="Nephrin family interactions"/>
</dbReference>
<dbReference type="Reactome" id="R-HSA-375165">
    <property type="pathway name" value="NCAM signaling for neurite out-growth"/>
</dbReference>
<dbReference type="Reactome" id="R-HSA-389356">
    <property type="pathway name" value="Co-stimulation by CD28"/>
</dbReference>
<dbReference type="Reactome" id="R-HSA-389357">
    <property type="pathway name" value="CD28 dependent PI3K/Akt signaling"/>
</dbReference>
<dbReference type="Reactome" id="R-HSA-389359">
    <property type="pathway name" value="CD28 dependent Vav1 pathway"/>
</dbReference>
<dbReference type="Reactome" id="R-HSA-389513">
    <property type="pathway name" value="Co-inhibition by CTLA4"/>
</dbReference>
<dbReference type="Reactome" id="R-HSA-3928662">
    <property type="pathway name" value="EPHB-mediated forward signaling"/>
</dbReference>
<dbReference type="Reactome" id="R-HSA-3928663">
    <property type="pathway name" value="EPHA-mediated growth cone collapse"/>
</dbReference>
<dbReference type="Reactome" id="R-HSA-3928664">
    <property type="pathway name" value="Ephrin signaling"/>
</dbReference>
<dbReference type="Reactome" id="R-HSA-3928665">
    <property type="pathway name" value="EPH-ephrin mediated repulsion of cells"/>
</dbReference>
<dbReference type="Reactome" id="R-HSA-399954">
    <property type="pathway name" value="Sema3A PAK dependent Axon repulsion"/>
</dbReference>
<dbReference type="Reactome" id="R-HSA-399955">
    <property type="pathway name" value="SEMA3A-Plexin repulsion signaling by inhibiting Integrin adhesion"/>
</dbReference>
<dbReference type="Reactome" id="R-HSA-399956">
    <property type="pathway name" value="CRMPs in Sema3A signaling"/>
</dbReference>
<dbReference type="Reactome" id="R-HSA-418885">
    <molecule id="P06241-1"/>
    <property type="pathway name" value="DCC mediated attractive signaling"/>
</dbReference>
<dbReference type="Reactome" id="R-HSA-4420097">
    <property type="pathway name" value="VEGFA-VEGFR2 Pathway"/>
</dbReference>
<dbReference type="Reactome" id="R-HSA-5621480">
    <property type="pathway name" value="Dectin-2 family"/>
</dbReference>
<dbReference type="Reactome" id="R-HSA-5621575">
    <property type="pathway name" value="CD209 (DC-SIGN) signaling"/>
</dbReference>
<dbReference type="Reactome" id="R-HSA-5673001">
    <property type="pathway name" value="RAF/MAP kinase cascade"/>
</dbReference>
<dbReference type="Reactome" id="R-HSA-6811558">
    <property type="pathway name" value="PI5P, PP2A and IER3 Regulate PI3K/AKT Signaling"/>
</dbReference>
<dbReference type="Reactome" id="R-HSA-75892">
    <property type="pathway name" value="Platelet Adhesion to exposed collagen"/>
</dbReference>
<dbReference type="Reactome" id="R-HSA-8866376">
    <property type="pathway name" value="Reelin signalling pathway"/>
</dbReference>
<dbReference type="Reactome" id="R-HSA-9032500">
    <molecule id="P06241-1"/>
    <property type="pathway name" value="Activated NTRK2 signals through FYN"/>
</dbReference>
<dbReference type="Reactome" id="R-HSA-9032759">
    <molecule id="P06241-1"/>
    <property type="pathway name" value="NTRK2 activates RAC1"/>
</dbReference>
<dbReference type="Reactome" id="R-HSA-912631">
    <property type="pathway name" value="Regulation of signaling by CBL"/>
</dbReference>
<dbReference type="Reactome" id="R-HSA-9664323">
    <property type="pathway name" value="FCGR3A-mediated IL10 synthesis"/>
</dbReference>
<dbReference type="Reactome" id="R-HSA-9664422">
    <property type="pathway name" value="FCGR3A-mediated phagocytosis"/>
</dbReference>
<dbReference type="Reactome" id="R-HSA-9670439">
    <property type="pathway name" value="Signaling by phosphorylated juxtamembrane, extracellular and kinase domain KIT mutants"/>
</dbReference>
<dbReference type="Reactome" id="R-HSA-9680350">
    <property type="pathway name" value="Signaling by CSF1 (M-CSF) in myeloid cells"/>
</dbReference>
<dbReference type="Reactome" id="R-HSA-9706374">
    <property type="pathway name" value="FLT3 signaling through SRC family kinases"/>
</dbReference>
<dbReference type="Reactome" id="R-HSA-983695">
    <property type="pathway name" value="Antigen activates B Cell Receptor (BCR) leading to generation of second messengers"/>
</dbReference>
<dbReference type="Reactome" id="R-HSA-9856530">
    <property type="pathway name" value="High laminar flow shear stress activates signaling by PIEZO1 and PECAM1:CDH5:KDR in endothelial cells"/>
</dbReference>
<dbReference type="SignaLink" id="P06241"/>
<dbReference type="SIGNOR" id="P06241"/>
<dbReference type="BioGRID-ORCS" id="2534">
    <property type="hits" value="11 hits in 1188 CRISPR screens"/>
</dbReference>
<dbReference type="CD-CODE" id="5506006C">
    <property type="entry name" value="Synthetic Condensate 000177"/>
</dbReference>
<dbReference type="CD-CODE" id="8C2F96ED">
    <property type="entry name" value="Centrosome"/>
</dbReference>
<dbReference type="CD-CODE" id="91857CE7">
    <property type="entry name" value="Nucleolus"/>
</dbReference>
<dbReference type="CD-CODE" id="DEE660B4">
    <property type="entry name" value="Stress granule"/>
</dbReference>
<dbReference type="CD-CODE" id="FB4E32DD">
    <property type="entry name" value="Presynaptic clusters and postsynaptic densities"/>
</dbReference>
<dbReference type="ChiTaRS" id="FYN">
    <property type="organism name" value="human"/>
</dbReference>
<dbReference type="EvolutionaryTrace" id="P06241"/>
<dbReference type="GeneWiki" id="FYN"/>
<dbReference type="GenomeRNAi" id="2534"/>
<dbReference type="Pharos" id="P06241">
    <property type="development level" value="Tclin"/>
</dbReference>
<dbReference type="PRO" id="PR:P06241"/>
<dbReference type="Proteomes" id="UP000005640">
    <property type="component" value="Chromosome 6"/>
</dbReference>
<dbReference type="RNAct" id="P06241">
    <property type="molecule type" value="protein"/>
</dbReference>
<dbReference type="Bgee" id="ENSG00000010810">
    <property type="expression patterns" value="Expressed in ganglionic eminence and 213 other cell types or tissues"/>
</dbReference>
<dbReference type="ExpressionAtlas" id="P06241">
    <property type="expression patterns" value="baseline and differential"/>
</dbReference>
<dbReference type="GO" id="GO:0005884">
    <property type="term" value="C:actin filament"/>
    <property type="evidence" value="ECO:0007669"/>
    <property type="project" value="Ensembl"/>
</dbReference>
<dbReference type="GO" id="GO:0044297">
    <property type="term" value="C:cell body"/>
    <property type="evidence" value="ECO:0000250"/>
    <property type="project" value="ARUK-UCL"/>
</dbReference>
<dbReference type="GO" id="GO:0005829">
    <property type="term" value="C:cytosol"/>
    <property type="evidence" value="ECO:0000314"/>
    <property type="project" value="HPA"/>
</dbReference>
<dbReference type="GO" id="GO:0030425">
    <property type="term" value="C:dendrite"/>
    <property type="evidence" value="ECO:0000314"/>
    <property type="project" value="ARUK-UCL"/>
</dbReference>
<dbReference type="GO" id="GO:0005768">
    <property type="term" value="C:endosome"/>
    <property type="evidence" value="ECO:0000314"/>
    <property type="project" value="HGNC-UCL"/>
</dbReference>
<dbReference type="GO" id="GO:0097386">
    <property type="term" value="C:glial cell projection"/>
    <property type="evidence" value="ECO:0000250"/>
    <property type="project" value="ARUK-UCL"/>
</dbReference>
<dbReference type="GO" id="GO:0098978">
    <property type="term" value="C:glutamatergic synapse"/>
    <property type="evidence" value="ECO:0007669"/>
    <property type="project" value="Ensembl"/>
</dbReference>
<dbReference type="GO" id="GO:0045121">
    <property type="term" value="C:membrane raft"/>
    <property type="evidence" value="ECO:0000314"/>
    <property type="project" value="UniProt"/>
</dbReference>
<dbReference type="GO" id="GO:0005739">
    <property type="term" value="C:mitochondrion"/>
    <property type="evidence" value="ECO:0000250"/>
    <property type="project" value="ARUK-UCL"/>
</dbReference>
<dbReference type="GO" id="GO:0005634">
    <property type="term" value="C:nucleus"/>
    <property type="evidence" value="ECO:0000250"/>
    <property type="project" value="ARUK-UCL"/>
</dbReference>
<dbReference type="GO" id="GO:0043204">
    <property type="term" value="C:perikaryon"/>
    <property type="evidence" value="ECO:0007669"/>
    <property type="project" value="UniProtKB-SubCell"/>
</dbReference>
<dbReference type="GO" id="GO:0097038">
    <property type="term" value="C:perinuclear endoplasmic reticulum"/>
    <property type="evidence" value="ECO:0000250"/>
    <property type="project" value="ARUK-UCL"/>
</dbReference>
<dbReference type="GO" id="GO:0048471">
    <property type="term" value="C:perinuclear region of cytoplasm"/>
    <property type="evidence" value="ECO:0000250"/>
    <property type="project" value="ARUK-UCL"/>
</dbReference>
<dbReference type="GO" id="GO:0005886">
    <property type="term" value="C:plasma membrane"/>
    <property type="evidence" value="ECO:0000314"/>
    <property type="project" value="BHF-UCL"/>
</dbReference>
<dbReference type="GO" id="GO:0014069">
    <property type="term" value="C:postsynaptic density"/>
    <property type="evidence" value="ECO:0000250"/>
    <property type="project" value="ARUK-UCL"/>
</dbReference>
<dbReference type="GO" id="GO:0099092">
    <property type="term" value="C:postsynaptic density, intracellular component"/>
    <property type="evidence" value="ECO:0007669"/>
    <property type="project" value="Ensembl"/>
</dbReference>
<dbReference type="GO" id="GO:0098685">
    <property type="term" value="C:Schaffer collateral - CA1 synapse"/>
    <property type="evidence" value="ECO:0007669"/>
    <property type="project" value="Ensembl"/>
</dbReference>
<dbReference type="GO" id="GO:0043014">
    <property type="term" value="F:alpha-tubulin binding"/>
    <property type="evidence" value="ECO:0000250"/>
    <property type="project" value="ARUK-UCL"/>
</dbReference>
<dbReference type="GO" id="GO:0005524">
    <property type="term" value="F:ATP binding"/>
    <property type="evidence" value="ECO:0007669"/>
    <property type="project" value="UniProtKB-KW"/>
</dbReference>
<dbReference type="GO" id="GO:0042609">
    <property type="term" value="F:CD4 receptor binding"/>
    <property type="evidence" value="ECO:0007669"/>
    <property type="project" value="Ensembl"/>
</dbReference>
<dbReference type="GO" id="GO:0042610">
    <property type="term" value="F:CD8 receptor binding"/>
    <property type="evidence" value="ECO:0007669"/>
    <property type="project" value="Ensembl"/>
</dbReference>
<dbReference type="GO" id="GO:0097718">
    <property type="term" value="F:disordered domain specific binding"/>
    <property type="evidence" value="ECO:0000353"/>
    <property type="project" value="CAFA"/>
</dbReference>
<dbReference type="GO" id="GO:0019899">
    <property type="term" value="F:enzyme binding"/>
    <property type="evidence" value="ECO:0000353"/>
    <property type="project" value="ARUK-UCL"/>
</dbReference>
<dbReference type="GO" id="GO:0046875">
    <property type="term" value="F:ephrin receptor binding"/>
    <property type="evidence" value="ECO:0000353"/>
    <property type="project" value="UniProtKB"/>
</dbReference>
<dbReference type="GO" id="GO:0001664">
    <property type="term" value="F:G protein-coupled receptor binding"/>
    <property type="evidence" value="ECO:0000353"/>
    <property type="project" value="MGI"/>
</dbReference>
<dbReference type="GO" id="GO:0070851">
    <property type="term" value="F:growth factor receptor binding"/>
    <property type="evidence" value="ECO:0000353"/>
    <property type="project" value="UniProtKB"/>
</dbReference>
<dbReference type="GO" id="GO:0042802">
    <property type="term" value="F:identical protein binding"/>
    <property type="evidence" value="ECO:0000353"/>
    <property type="project" value="IntAct"/>
</dbReference>
<dbReference type="GO" id="GO:0046872">
    <property type="term" value="F:metal ion binding"/>
    <property type="evidence" value="ECO:0007669"/>
    <property type="project" value="UniProtKB-KW"/>
</dbReference>
<dbReference type="GO" id="GO:0004715">
    <property type="term" value="F:non-membrane spanning protein tyrosine kinase activity"/>
    <property type="evidence" value="ECO:0000314"/>
    <property type="project" value="ARUK-UCL"/>
</dbReference>
<dbReference type="GO" id="GO:0051428">
    <property type="term" value="F:peptide hormone receptor binding"/>
    <property type="evidence" value="ECO:0007669"/>
    <property type="project" value="Ensembl"/>
</dbReference>
<dbReference type="GO" id="GO:0043548">
    <property type="term" value="F:phosphatidylinositol 3-kinase binding"/>
    <property type="evidence" value="ECO:0007669"/>
    <property type="project" value="Ensembl"/>
</dbReference>
<dbReference type="GO" id="GO:0016004">
    <property type="term" value="F:phospholipase activator activity"/>
    <property type="evidence" value="ECO:0000314"/>
    <property type="project" value="ARUK-UCL"/>
</dbReference>
<dbReference type="GO" id="GO:0043274">
    <property type="term" value="F:phospholipase binding"/>
    <property type="evidence" value="ECO:0000353"/>
    <property type="project" value="ARUK-UCL"/>
</dbReference>
<dbReference type="GO" id="GO:0004713">
    <property type="term" value="F:protein tyrosine kinase activity"/>
    <property type="evidence" value="ECO:0000314"/>
    <property type="project" value="UniProt"/>
</dbReference>
<dbReference type="GO" id="GO:0097110">
    <property type="term" value="F:scaffold protein binding"/>
    <property type="evidence" value="ECO:0000353"/>
    <property type="project" value="ARUK-UCL"/>
</dbReference>
<dbReference type="GO" id="GO:0005102">
    <property type="term" value="F:signaling receptor binding"/>
    <property type="evidence" value="ECO:0000318"/>
    <property type="project" value="GO_Central"/>
</dbReference>
<dbReference type="GO" id="GO:0042608">
    <property type="term" value="F:T cell receptor binding"/>
    <property type="evidence" value="ECO:0007669"/>
    <property type="project" value="Ensembl"/>
</dbReference>
<dbReference type="GO" id="GO:0048156">
    <property type="term" value="F:tau protein binding"/>
    <property type="evidence" value="ECO:0000250"/>
    <property type="project" value="ARUK-UCL"/>
</dbReference>
<dbReference type="GO" id="GO:0050321">
    <property type="term" value="F:tau-protein kinase activity"/>
    <property type="evidence" value="ECO:0000303"/>
    <property type="project" value="ARUK-UCL"/>
</dbReference>
<dbReference type="GO" id="GO:0044325">
    <property type="term" value="F:transmembrane transporter binding"/>
    <property type="evidence" value="ECO:0007669"/>
    <property type="project" value="Ensembl"/>
</dbReference>
<dbReference type="GO" id="GO:0031802">
    <property type="term" value="F:type 5 metabotropic glutamate receptor binding"/>
    <property type="evidence" value="ECO:0000250"/>
    <property type="project" value="ARUK-UCL"/>
</dbReference>
<dbReference type="GO" id="GO:0050798">
    <property type="term" value="P:activated T cell proliferation"/>
    <property type="evidence" value="ECO:0007669"/>
    <property type="project" value="Ensembl"/>
</dbReference>
<dbReference type="GO" id="GO:0002250">
    <property type="term" value="P:adaptive immune response"/>
    <property type="evidence" value="ECO:0007669"/>
    <property type="project" value="UniProtKB-KW"/>
</dbReference>
<dbReference type="GO" id="GO:0007411">
    <property type="term" value="P:axon guidance"/>
    <property type="evidence" value="ECO:0000304"/>
    <property type="project" value="Reactome"/>
</dbReference>
<dbReference type="GO" id="GO:0006816">
    <property type="term" value="P:calcium ion transport"/>
    <property type="evidence" value="ECO:0000303"/>
    <property type="project" value="UniProtKB"/>
</dbReference>
<dbReference type="GO" id="GO:0030154">
    <property type="term" value="P:cell differentiation"/>
    <property type="evidence" value="ECO:0000318"/>
    <property type="project" value="GO_Central"/>
</dbReference>
<dbReference type="GO" id="GO:0007169">
    <property type="term" value="P:cell surface receptor protein tyrosine kinase signaling pathway"/>
    <property type="evidence" value="ECO:0000318"/>
    <property type="project" value="GO_Central"/>
</dbReference>
<dbReference type="GO" id="GO:1904646">
    <property type="term" value="P:cellular response to amyloid-beta"/>
    <property type="evidence" value="ECO:0000315"/>
    <property type="project" value="ARUK-UCL"/>
</dbReference>
<dbReference type="GO" id="GO:1905430">
    <property type="term" value="P:cellular response to glycine"/>
    <property type="evidence" value="ECO:0000250"/>
    <property type="project" value="ARUK-UCL"/>
</dbReference>
<dbReference type="GO" id="GO:0070301">
    <property type="term" value="P:cellular response to hydrogen peroxide"/>
    <property type="evidence" value="ECO:0000250"/>
    <property type="project" value="ARUK-UCL"/>
</dbReference>
<dbReference type="GO" id="GO:1905232">
    <property type="term" value="P:cellular response to L-glutamate"/>
    <property type="evidence" value="ECO:0000250"/>
    <property type="project" value="ARUK-UCL"/>
</dbReference>
<dbReference type="GO" id="GO:0071375">
    <property type="term" value="P:cellular response to peptide hormone stimulus"/>
    <property type="evidence" value="ECO:0007669"/>
    <property type="project" value="Ensembl"/>
</dbReference>
<dbReference type="GO" id="GO:0036120">
    <property type="term" value="P:cellular response to platelet-derived growth factor stimulus"/>
    <property type="evidence" value="ECO:0007669"/>
    <property type="project" value="Ensembl"/>
</dbReference>
<dbReference type="GO" id="GO:0071560">
    <property type="term" value="P:cellular response to transforming growth factor beta stimulus"/>
    <property type="evidence" value="ECO:0007669"/>
    <property type="project" value="Ensembl"/>
</dbReference>
<dbReference type="GO" id="GO:0048813">
    <property type="term" value="P:dendrite morphogenesis"/>
    <property type="evidence" value="ECO:0007669"/>
    <property type="project" value="Ensembl"/>
</dbReference>
<dbReference type="GO" id="GO:0097062">
    <property type="term" value="P:dendritic spine maintenance"/>
    <property type="evidence" value="ECO:0000304"/>
    <property type="project" value="ARUK-UCL"/>
</dbReference>
<dbReference type="GO" id="GO:0050966">
    <property type="term" value="P:detection of mechanical stimulus involved in sensory perception of pain"/>
    <property type="evidence" value="ECO:0007669"/>
    <property type="project" value="Ensembl"/>
</dbReference>
<dbReference type="GO" id="GO:0048013">
    <property type="term" value="P:ephrin receptor signaling pathway"/>
    <property type="evidence" value="ECO:0000304"/>
    <property type="project" value="Reactome"/>
</dbReference>
<dbReference type="GO" id="GO:0038096">
    <property type="term" value="P:Fc-gamma receptor signaling pathway involved in phagocytosis"/>
    <property type="evidence" value="ECO:0000304"/>
    <property type="project" value="Reactome"/>
</dbReference>
<dbReference type="GO" id="GO:0007631">
    <property type="term" value="P:feeding behavior"/>
    <property type="evidence" value="ECO:0000304"/>
    <property type="project" value="ProtInc"/>
</dbReference>
<dbReference type="GO" id="GO:0030900">
    <property type="term" value="P:forebrain development"/>
    <property type="evidence" value="ECO:0007669"/>
    <property type="project" value="Ensembl"/>
</dbReference>
<dbReference type="GO" id="GO:0007216">
    <property type="term" value="P:G protein-coupled glutamate receptor signaling pathway"/>
    <property type="evidence" value="ECO:0000314"/>
    <property type="project" value="ARUK-UCL"/>
</dbReference>
<dbReference type="GO" id="GO:0010467">
    <property type="term" value="P:gene expression"/>
    <property type="evidence" value="ECO:0007669"/>
    <property type="project" value="Ensembl"/>
</dbReference>
<dbReference type="GO" id="GO:0003015">
    <property type="term" value="P:heart process"/>
    <property type="evidence" value="ECO:0000316"/>
    <property type="project" value="ARUK-UCL"/>
</dbReference>
<dbReference type="GO" id="GO:0035556">
    <property type="term" value="P:intracellular signal transduction"/>
    <property type="evidence" value="ECO:0000315"/>
    <property type="project" value="ARUK-UCL"/>
</dbReference>
<dbReference type="GO" id="GO:0007612">
    <property type="term" value="P:learning"/>
    <property type="evidence" value="ECO:0000304"/>
    <property type="project" value="ProtInc"/>
</dbReference>
<dbReference type="GO" id="GO:0050900">
    <property type="term" value="P:leukocyte migration"/>
    <property type="evidence" value="ECO:0000304"/>
    <property type="project" value="Reactome"/>
</dbReference>
<dbReference type="GO" id="GO:0050804">
    <property type="term" value="P:modulation of chemical synaptic transmission"/>
    <property type="evidence" value="ECO:0007669"/>
    <property type="project" value="Ensembl"/>
</dbReference>
<dbReference type="GO" id="GO:0030101">
    <property type="term" value="P:natural killer cell activation"/>
    <property type="evidence" value="ECO:0000314"/>
    <property type="project" value="UniProt"/>
</dbReference>
<dbReference type="GO" id="GO:0016525">
    <property type="term" value="P:negative regulation of angiogenesis"/>
    <property type="evidence" value="ECO:0007669"/>
    <property type="project" value="Ensembl"/>
</dbReference>
<dbReference type="GO" id="GO:1902951">
    <property type="term" value="P:negative regulation of dendritic spine maintenance"/>
    <property type="evidence" value="ECO:0000250"/>
    <property type="project" value="ARUK-UCL"/>
</dbReference>
<dbReference type="GO" id="GO:2001240">
    <property type="term" value="P:negative regulation of extrinsic apoptotic signaling pathway in absence of ligand"/>
    <property type="evidence" value="ECO:0007669"/>
    <property type="project" value="Ensembl"/>
</dbReference>
<dbReference type="GO" id="GO:0010629">
    <property type="term" value="P:negative regulation of gene expression"/>
    <property type="evidence" value="ECO:0007669"/>
    <property type="project" value="Ensembl"/>
</dbReference>
<dbReference type="GO" id="GO:0010730">
    <property type="term" value="P:negative regulation of hydrogen peroxide biosynthetic process"/>
    <property type="evidence" value="ECO:0000250"/>
    <property type="project" value="ARUK-UCL"/>
</dbReference>
<dbReference type="GO" id="GO:0002862">
    <property type="term" value="P:negative regulation of inflammatory response to antigenic stimulus"/>
    <property type="evidence" value="ECO:0000304"/>
    <property type="project" value="Reactome"/>
</dbReference>
<dbReference type="GO" id="GO:0043524">
    <property type="term" value="P:negative regulation of neuron apoptotic process"/>
    <property type="evidence" value="ECO:0007669"/>
    <property type="project" value="Ensembl"/>
</dbReference>
<dbReference type="GO" id="GO:1902176">
    <property type="term" value="P:negative regulation of oxidative stress-induced intrinsic apoptotic signaling pathway"/>
    <property type="evidence" value="ECO:0000250"/>
    <property type="project" value="ARUK-UCL"/>
</dbReference>
<dbReference type="GO" id="GO:0042177">
    <property type="term" value="P:negative regulation of protein catabolic process"/>
    <property type="evidence" value="ECO:0007669"/>
    <property type="project" value="Ensembl"/>
</dbReference>
<dbReference type="GO" id="GO:0031397">
    <property type="term" value="P:negative regulation of protein ubiquitination"/>
    <property type="evidence" value="ECO:0007669"/>
    <property type="project" value="Ensembl"/>
</dbReference>
<dbReference type="GO" id="GO:0001764">
    <property type="term" value="P:neuron migration"/>
    <property type="evidence" value="ECO:0007669"/>
    <property type="project" value="Ensembl"/>
</dbReference>
<dbReference type="GO" id="GO:0018108">
    <property type="term" value="P:peptidyl-tyrosine phosphorylation"/>
    <property type="evidence" value="ECO:0000315"/>
    <property type="project" value="UniProtKB"/>
</dbReference>
<dbReference type="GO" id="GO:0010976">
    <property type="term" value="P:positive regulation of neuron projection development"/>
    <property type="evidence" value="ECO:0007669"/>
    <property type="project" value="Ensembl"/>
</dbReference>
<dbReference type="GO" id="GO:0051897">
    <property type="term" value="P:positive regulation of phosphatidylinositol 3-kinase/protein kinase B signal transduction"/>
    <property type="evidence" value="ECO:0007669"/>
    <property type="project" value="Ensembl"/>
</dbReference>
<dbReference type="GO" id="GO:1905477">
    <property type="term" value="P:positive regulation of protein localization to membrane"/>
    <property type="evidence" value="ECO:0000304"/>
    <property type="project" value="ARUK-UCL"/>
</dbReference>
<dbReference type="GO" id="GO:1900182">
    <property type="term" value="P:positive regulation of protein localization to nucleus"/>
    <property type="evidence" value="ECO:0007669"/>
    <property type="project" value="Ensembl"/>
</dbReference>
<dbReference type="GO" id="GO:0090314">
    <property type="term" value="P:positive regulation of protein targeting to membrane"/>
    <property type="evidence" value="ECO:0000250"/>
    <property type="project" value="ARUK-UCL"/>
</dbReference>
<dbReference type="GO" id="GO:0030163">
    <property type="term" value="P:protein catabolic process"/>
    <property type="evidence" value="ECO:0007669"/>
    <property type="project" value="Ensembl"/>
</dbReference>
<dbReference type="GO" id="GO:0006468">
    <property type="term" value="P:protein phosphorylation"/>
    <property type="evidence" value="ECO:0000303"/>
    <property type="project" value="UniProtKB"/>
</dbReference>
<dbReference type="GO" id="GO:0016567">
    <property type="term" value="P:protein ubiquitination"/>
    <property type="evidence" value="ECO:0007669"/>
    <property type="project" value="Ensembl"/>
</dbReference>
<dbReference type="GO" id="GO:0038026">
    <property type="term" value="P:reelin-mediated signaling pathway"/>
    <property type="evidence" value="ECO:0000250"/>
    <property type="project" value="UniProtKB"/>
</dbReference>
<dbReference type="GO" id="GO:1905664">
    <property type="term" value="P:regulation of calcium ion import across plasma membrane"/>
    <property type="evidence" value="ECO:0000250"/>
    <property type="project" value="ARUK-UCL"/>
</dbReference>
<dbReference type="GO" id="GO:0008360">
    <property type="term" value="P:regulation of cell shape"/>
    <property type="evidence" value="ECO:0000250"/>
    <property type="project" value="ARUK-UCL"/>
</dbReference>
<dbReference type="GO" id="GO:1900449">
    <property type="term" value="P:regulation of glutamate receptor signaling pathway"/>
    <property type="evidence" value="ECO:0000250"/>
    <property type="project" value="ARUK-UCL"/>
</dbReference>
<dbReference type="GO" id="GO:1904645">
    <property type="term" value="P:response to amyloid-beta"/>
    <property type="evidence" value="ECO:0000250"/>
    <property type="project" value="ARUK-UCL"/>
</dbReference>
<dbReference type="GO" id="GO:0045471">
    <property type="term" value="P:response to ethanol"/>
    <property type="evidence" value="ECO:0007669"/>
    <property type="project" value="Ensembl"/>
</dbReference>
<dbReference type="GO" id="GO:0000304">
    <property type="term" value="P:response to singlet oxygen"/>
    <property type="evidence" value="ECO:0000250"/>
    <property type="project" value="ARUK-UCL"/>
</dbReference>
<dbReference type="GO" id="GO:0009410">
    <property type="term" value="P:response to xenobiotic stimulus"/>
    <property type="evidence" value="ECO:0007669"/>
    <property type="project" value="Ensembl"/>
</dbReference>
<dbReference type="GO" id="GO:0002223">
    <property type="term" value="P:stimulatory C-type lectin receptor signaling pathway"/>
    <property type="evidence" value="ECO:0000304"/>
    <property type="project" value="Reactome"/>
</dbReference>
<dbReference type="GO" id="GO:0031295">
    <property type="term" value="P:T cell costimulation"/>
    <property type="evidence" value="ECO:0000304"/>
    <property type="project" value="Reactome"/>
</dbReference>
<dbReference type="GO" id="GO:0050852">
    <property type="term" value="P:T cell receptor signaling pathway"/>
    <property type="evidence" value="ECO:0000314"/>
    <property type="project" value="UniProtKB"/>
</dbReference>
<dbReference type="GO" id="GO:0048010">
    <property type="term" value="P:vascular endothelial growth factor receptor signaling pathway"/>
    <property type="evidence" value="ECO:0000304"/>
    <property type="project" value="Reactome"/>
</dbReference>
<dbReference type="CDD" id="cd05070">
    <property type="entry name" value="PTKc_Fyn"/>
    <property type="match status" value="1"/>
</dbReference>
<dbReference type="CDD" id="cd10418">
    <property type="entry name" value="SH2_Src_Fyn_isoform_a_like"/>
    <property type="match status" value="1"/>
</dbReference>
<dbReference type="CDD" id="cd12006">
    <property type="entry name" value="SH3_Fyn_Yrk"/>
    <property type="match status" value="1"/>
</dbReference>
<dbReference type="FunFam" id="1.10.510.10:FF:000553">
    <property type="entry name" value="Tyrosine-protein kinase"/>
    <property type="match status" value="1"/>
</dbReference>
<dbReference type="FunFam" id="3.30.200.20:FF:000016">
    <property type="entry name" value="Tyrosine-protein kinase"/>
    <property type="match status" value="1"/>
</dbReference>
<dbReference type="FunFam" id="2.30.30.40:FF:000182">
    <property type="entry name" value="Tyrosine-protein kinase Fyn"/>
    <property type="match status" value="1"/>
</dbReference>
<dbReference type="FunFam" id="3.30.505.10:FF:000120">
    <property type="entry name" value="Tyrosine-protein kinase Fyn"/>
    <property type="match status" value="1"/>
</dbReference>
<dbReference type="Gene3D" id="3.30.200.20">
    <property type="entry name" value="Phosphorylase Kinase, domain 1"/>
    <property type="match status" value="1"/>
</dbReference>
<dbReference type="Gene3D" id="3.30.505.10">
    <property type="entry name" value="SH2 domain"/>
    <property type="match status" value="1"/>
</dbReference>
<dbReference type="Gene3D" id="2.30.30.40">
    <property type="entry name" value="SH3 Domains"/>
    <property type="match status" value="1"/>
</dbReference>
<dbReference type="Gene3D" id="1.10.510.10">
    <property type="entry name" value="Transferase(Phosphotransferase) domain 1"/>
    <property type="match status" value="1"/>
</dbReference>
<dbReference type="IDEAL" id="IID00698"/>
<dbReference type="InterPro" id="IPR047924">
    <property type="entry name" value="Fyn/Yrk_SH2"/>
</dbReference>
<dbReference type="InterPro" id="IPR035750">
    <property type="entry name" value="Fyn/Yrk_SH3"/>
</dbReference>
<dbReference type="InterPro" id="IPR011009">
    <property type="entry name" value="Kinase-like_dom_sf"/>
</dbReference>
<dbReference type="InterPro" id="IPR050198">
    <property type="entry name" value="Non-receptor_tyrosine_kinases"/>
</dbReference>
<dbReference type="InterPro" id="IPR000719">
    <property type="entry name" value="Prot_kinase_dom"/>
</dbReference>
<dbReference type="InterPro" id="IPR017441">
    <property type="entry name" value="Protein_kinase_ATP_BS"/>
</dbReference>
<dbReference type="InterPro" id="IPR001245">
    <property type="entry name" value="Ser-Thr/Tyr_kinase_cat_dom"/>
</dbReference>
<dbReference type="InterPro" id="IPR000980">
    <property type="entry name" value="SH2"/>
</dbReference>
<dbReference type="InterPro" id="IPR036860">
    <property type="entry name" value="SH2_dom_sf"/>
</dbReference>
<dbReference type="InterPro" id="IPR036028">
    <property type="entry name" value="SH3-like_dom_sf"/>
</dbReference>
<dbReference type="InterPro" id="IPR001452">
    <property type="entry name" value="SH3_domain"/>
</dbReference>
<dbReference type="InterPro" id="IPR008266">
    <property type="entry name" value="Tyr_kinase_AS"/>
</dbReference>
<dbReference type="InterPro" id="IPR020635">
    <property type="entry name" value="Tyr_kinase_cat_dom"/>
</dbReference>
<dbReference type="PANTHER" id="PTHR24418">
    <property type="entry name" value="TYROSINE-PROTEIN KINASE"/>
    <property type="match status" value="1"/>
</dbReference>
<dbReference type="Pfam" id="PF07714">
    <property type="entry name" value="PK_Tyr_Ser-Thr"/>
    <property type="match status" value="1"/>
</dbReference>
<dbReference type="Pfam" id="PF00017">
    <property type="entry name" value="SH2"/>
    <property type="match status" value="1"/>
</dbReference>
<dbReference type="Pfam" id="PF00018">
    <property type="entry name" value="SH3_1"/>
    <property type="match status" value="1"/>
</dbReference>
<dbReference type="PRINTS" id="PR00401">
    <property type="entry name" value="SH2DOMAIN"/>
</dbReference>
<dbReference type="PRINTS" id="PR00452">
    <property type="entry name" value="SH3DOMAIN"/>
</dbReference>
<dbReference type="PRINTS" id="PR00109">
    <property type="entry name" value="TYRKINASE"/>
</dbReference>
<dbReference type="SMART" id="SM00252">
    <property type="entry name" value="SH2"/>
    <property type="match status" value="1"/>
</dbReference>
<dbReference type="SMART" id="SM00326">
    <property type="entry name" value="SH3"/>
    <property type="match status" value="1"/>
</dbReference>
<dbReference type="SMART" id="SM00219">
    <property type="entry name" value="TyrKc"/>
    <property type="match status" value="1"/>
</dbReference>
<dbReference type="SUPFAM" id="SSF56112">
    <property type="entry name" value="Protein kinase-like (PK-like)"/>
    <property type="match status" value="1"/>
</dbReference>
<dbReference type="SUPFAM" id="SSF55550">
    <property type="entry name" value="SH2 domain"/>
    <property type="match status" value="1"/>
</dbReference>
<dbReference type="SUPFAM" id="SSF50044">
    <property type="entry name" value="SH3-domain"/>
    <property type="match status" value="1"/>
</dbReference>
<dbReference type="PROSITE" id="PS00107">
    <property type="entry name" value="PROTEIN_KINASE_ATP"/>
    <property type="match status" value="1"/>
</dbReference>
<dbReference type="PROSITE" id="PS50011">
    <property type="entry name" value="PROTEIN_KINASE_DOM"/>
    <property type="match status" value="1"/>
</dbReference>
<dbReference type="PROSITE" id="PS00109">
    <property type="entry name" value="PROTEIN_KINASE_TYR"/>
    <property type="match status" value="1"/>
</dbReference>
<dbReference type="PROSITE" id="PS50001">
    <property type="entry name" value="SH2"/>
    <property type="match status" value="1"/>
</dbReference>
<dbReference type="PROSITE" id="PS50002">
    <property type="entry name" value="SH3"/>
    <property type="match status" value="1"/>
</dbReference>
<comment type="function">
    <text evidence="2 12 13 15 18 19 21 23 25 26 27 28 30 33 34 35 36 38 39 40 42 43 52">Non-receptor tyrosine-protein kinase that plays a role in many biological processes including regulation of cell growth and survival, cell adhesion, integrin-mediated signaling, cytoskeletal remodeling, cell motility, immune response and axon guidance (PubMed:11536198, PubMed:15489916, PubMed:15557120, PubMed:16387660, PubMed:20100835, PubMed:7568038, PubMed:7822789). Inactive FYN is phosphorylated on its C-terminal tail within the catalytic domain (PubMed:15489916). Following activation by PKA, the protein subsequently associates with PTK2/FAK1, allowing PTK2/FAK1 phosphorylation, activation and targeting to focal adhesions (PubMed:15489916). Involved in the regulation of cell adhesion and motility through phosphorylation of CTNNB1 (beta-catenin) and CTNND1 (delta-catenin) (PubMed:17194753). Regulates cytoskeletal remodeling by phosphorylating several proteins including the actin regulator WAS and the microtubule-associated proteins MAP2 and MAPT (PubMed:14707117, PubMed:15536091). Promotes cell survival by phosphorylating AGAP2/PIKE-A and preventing its apoptotic cleavage (PubMed:16841086). Participates in signal transduction pathways that regulate the integrity of the glomerular slit diaphragm (an essential part of the glomerular filter of the kidney) by phosphorylating several slit diaphragm components including NPHS1, KIRREL1 and TRPC6 (PubMed:14761972, PubMed:18258597, PubMed:19179337). Plays a role in neural processes by phosphorylating DPYSL2, a multifunctional adapter protein within the central nervous system, ARHGAP32, a regulator for Rho family GTPases implicated in various neural functions, and SNCA, a small pre-synaptic protein (PubMed:11162638, PubMed:12788081, PubMed:19652227). Involved in reelin signaling by mediating phosphorylation of DAB1 following reelin (RELN)-binding to its receptor (By similarity). Participates in the downstream signaling pathways that lead to T-cell differentiation and proliferation following T-cell receptor (TCR) stimulation (PubMed:22080863). Phosphorylates PTK2B/PYK2 in response to T-cell receptor activation (PubMed:20028775). Also participates in negative feedback regulation of TCR signaling through phosphorylation of PAG1, thereby promoting interaction between PAG1 and CSK and recruitment of CSK to lipid rafts (PubMed:18056706). CSK maintains LCK and FYN in an inactive form (By similarity). Promotes CD28-induced phosphorylation of VAV1 (PubMed:11005864). In mast cells, phosphorylates CLNK after activation of immunoglobulin epsilon receptor signaling (By similarity). Can also promote CD244-mediated NK cell activation (PubMed:15713798).</text>
</comment>
<comment type="catalytic activity">
    <reaction evidence="7 12 13 18 19 21 23 28 30 33 34 35 36 42">
        <text>L-tyrosyl-[protein] + ATP = O-phospho-L-tyrosyl-[protein] + ADP + H(+)</text>
        <dbReference type="Rhea" id="RHEA:10596"/>
        <dbReference type="Rhea" id="RHEA-COMP:10136"/>
        <dbReference type="Rhea" id="RHEA-COMP:20101"/>
        <dbReference type="ChEBI" id="CHEBI:15378"/>
        <dbReference type="ChEBI" id="CHEBI:30616"/>
        <dbReference type="ChEBI" id="CHEBI:46858"/>
        <dbReference type="ChEBI" id="CHEBI:61978"/>
        <dbReference type="ChEBI" id="CHEBI:456216"/>
        <dbReference type="EC" id="2.7.10.2"/>
    </reaction>
</comment>
<comment type="cofactor">
    <cofactor>
        <name>Mn(2+)</name>
        <dbReference type="ChEBI" id="CHEBI:29035"/>
    </cofactor>
</comment>
<comment type="activity regulation">
    <text evidence="29">Inhibited by phosphorylation of Tyr-531 by leukocyte common antigen and activated by dephosphorylation of this site.</text>
</comment>
<comment type="subunit">
    <text evidence="2 3 10 11 17 20 27 32 37 39 41 45 46 47 48 49 50">Interacts (via its SH3 domain) with PIK3R1 and PRMT8. Interacts with FYB1, PAG1, and SH2D1A. Interacts with CD79A (tyrosine-phosphorylated form); the interaction increases FYN activity. Interacts (via SH2 domain) with CSF1R (tyrosine phosphorylated) (By similarity). Interacts with TOM1L1 (phosphorylated form). Interacts with KDR (tyrosine phosphorylated). Interacts (via SH3 domain) with KLHL2 (via N-terminus) (By similarity). Interacts with SH2D1A and SLAMF1. Interacts with ITCH; the interaction phosphorylates ITCH and negatively regulates its activity. Interacts with FASLG. Interacts with RUNX3. Interacts with KIT. Interacts with EPHA8; possible downstream effector of EPHA8 in regulation of cell adhesion. Interacts with PTK2/FAK1; this interaction leads to PTK2/FAK1 phosphorylation and activation. Interacts with CAV1; this interaction couples integrins to the Ras-ERK pathway. Interacts with UNC119. Interacts (via SH2 domain) with PTPRH (phosphorylated form) (By similarity). Interacts with PTPRO (phosphorylated form) (By similarity). Interacts with PTPRB (phosphorylated form) (By similarity). Interacts with FYB2 (PubMed:27335501). Interacts with DSCAM (By similarity). Interacts with SKAP1 and FYB1; this interaction promotes the phosphorylation of CLNK (By similarity). Interacts with NEDD9; in the presence of PTK2 (PubMed:9360983).</text>
</comment>
<comment type="subunit">
    <text evidence="14">(Microbial infection) Interacts (via its SH3 domain) with hepatitis E virus/HEV protein ORF3.</text>
</comment>
<comment type="interaction">
    <interactant intactId="EBI-515315">
        <id>P06241</id>
    </interactant>
    <interactant intactId="EBI-1102694">
        <id>P42684</id>
        <label>ABL2</label>
    </interactant>
    <organismsDiffer>false</organismsDiffer>
    <experiments>2</experiments>
</comment>
<comment type="interaction">
    <interactant intactId="EBI-515315">
        <id>P06241</id>
    </interactant>
    <interactant intactId="EBI-1536151">
        <id>O14672</id>
        <label>ADAM10</label>
    </interactant>
    <organismsDiffer>false</organismsDiffer>
    <experiments>2</experiments>
</comment>
<comment type="interaction">
    <interactant intactId="EBI-515315">
        <id>P06241</id>
    </interactant>
    <interactant intactId="EBI-77818">
        <id>Q13444</id>
        <label>ADAM15</label>
    </interactant>
    <organismsDiffer>false</organismsDiffer>
    <experiments>2</experiments>
</comment>
<comment type="interaction">
    <interactant intactId="EBI-515315">
        <id>P06241</id>
    </interactant>
    <interactant intactId="EBI-296087">
        <id>P31749</id>
        <label>AKT1</label>
    </interactant>
    <organismsDiffer>false</organismsDiffer>
    <experiments>3</experiments>
</comment>
<comment type="interaction">
    <interactant intactId="EBI-515315">
        <id>P06241</id>
    </interactant>
    <interactant intactId="EBI-21535880">
        <id>Q92870-2</id>
        <label>APBB2</label>
    </interactant>
    <organismsDiffer>false</organismsDiffer>
    <experiments>3</experiments>
</comment>
<comment type="interaction">
    <interactant intactId="EBI-515315">
        <id>P06241</id>
    </interactant>
    <interactant intactId="EBI-2606935">
        <id>Q96BI3</id>
        <label>APH1A</label>
    </interactant>
    <organismsDiffer>false</organismsDiffer>
    <experiments>3</experiments>
</comment>
<comment type="interaction">
    <interactant intactId="EBI-515315">
        <id>P06241</id>
    </interactant>
    <interactant intactId="EBI-25646567">
        <id>Q06481-5</id>
        <label>APLP2</label>
    </interactant>
    <organismsDiffer>false</organismsDiffer>
    <experiments>3</experiments>
</comment>
<comment type="interaction">
    <interactant intactId="EBI-515315">
        <id>P06241</id>
    </interactant>
    <interactant intactId="EBI-77613">
        <id>P05067</id>
        <label>APP</label>
    </interactant>
    <organismsDiffer>false</organismsDiffer>
    <experiments>3</experiments>
</comment>
<comment type="interaction">
    <interactant intactId="EBI-515315">
        <id>P06241</id>
    </interactant>
    <interactant intactId="EBI-308663">
        <id>A7KAX9</id>
        <label>ARHGAP32</label>
    </interactant>
    <organismsDiffer>false</organismsDiffer>
    <experiments>4</experiments>
</comment>
<comment type="interaction">
    <interactant intactId="EBI-515315">
        <id>P06241</id>
    </interactant>
    <interactant intactId="EBI-1210010">
        <id>O14559</id>
        <label>ARHGAP33</label>
    </interactant>
    <organismsDiffer>false</organismsDiffer>
    <experiments>2</experiments>
</comment>
<comment type="interaction">
    <interactant intactId="EBI-515315">
        <id>P06241</id>
    </interactant>
    <interactant intactId="EBI-346622">
        <id>Q9ULH1</id>
        <label>ASAP1</label>
    </interactant>
    <organismsDiffer>false</organismsDiffer>
    <experiments>3</experiments>
</comment>
<comment type="interaction">
    <interactant intactId="EBI-515315">
        <id>P06241</id>
    </interactant>
    <interactant intactId="EBI-930964">
        <id>P54253</id>
        <label>ATXN1</label>
    </interactant>
    <organismsDiffer>false</organismsDiffer>
    <experiments>8</experiments>
</comment>
<comment type="interaction">
    <interactant intactId="EBI-515315">
        <id>P06241</id>
    </interactant>
    <interactant intactId="EBI-702093">
        <id>P56945</id>
        <label>BCAR1</label>
    </interactant>
    <organismsDiffer>false</organismsDiffer>
    <experiments>4</experiments>
</comment>
<comment type="interaction">
    <interactant intactId="EBI-515315">
        <id>P06241</id>
    </interactant>
    <interactant intactId="EBI-12275524">
        <id>P23560-2</id>
        <label>BDNF</label>
    </interactant>
    <organismsDiffer>false</organismsDiffer>
    <experiments>3</experiments>
</comment>
<comment type="interaction">
    <interactant intactId="EBI-515315">
        <id>P06241</id>
    </interactant>
    <interactant intactId="EBI-740135">
        <id>P35520</id>
        <label>CBS</label>
    </interactant>
    <organismsDiffer>false</organismsDiffer>
    <experiments>3</experiments>
</comment>
<comment type="interaction">
    <interactant intactId="EBI-515315">
        <id>P06241</id>
    </interactant>
    <interactant intactId="EBI-78129">
        <id>P83916</id>
        <label>CBX1</label>
    </interactant>
    <organismsDiffer>false</organismsDiffer>
    <experiments>3</experiments>
</comment>
<comment type="interaction">
    <interactant intactId="EBI-515315">
        <id>P06241</id>
    </interactant>
    <interactant intactId="EBI-6624398">
        <id>P06307</id>
        <label>CCK</label>
    </interactant>
    <organismsDiffer>false</organismsDiffer>
    <experiments>3</experiments>
</comment>
<comment type="interaction">
    <interactant intactId="EBI-515315">
        <id>P06241</id>
    </interactant>
    <interactant intactId="EBI-298152">
        <id>Q9Y5K6</id>
        <label>CD2AP</label>
    </interactant>
    <organismsDiffer>false</organismsDiffer>
    <experiments>2</experiments>
</comment>
<comment type="interaction">
    <interactant intactId="EBI-515315">
        <id>P06241</id>
    </interactant>
    <interactant intactId="EBI-295634">
        <id>Q16543</id>
        <label>CDC37</label>
    </interactant>
    <organismsDiffer>false</organismsDiffer>
    <experiments>6</experiments>
</comment>
<comment type="interaction">
    <interactant intactId="EBI-515315">
        <id>P06241</id>
    </interactant>
    <interactant intactId="EBI-446479">
        <id>P99999</id>
        <label>CYCS</label>
    </interactant>
    <organismsDiffer>false</organismsDiffer>
    <experiments>3</experiments>
</comment>
<comment type="interaction">
    <interactant intactId="EBI-515315">
        <id>P06241</id>
    </interactant>
    <interactant intactId="EBI-718488">
        <id>O43281</id>
        <label>EFS</label>
    </interactant>
    <organismsDiffer>false</organismsDiffer>
    <experiments>4</experiments>
</comment>
<comment type="interaction">
    <interactant intactId="EBI-515315">
        <id>P06241</id>
    </interactant>
    <interactant intactId="EBI-641062">
        <id>P04626</id>
        <label>ERBB2</label>
    </interactant>
    <organismsDiffer>false</organismsDiffer>
    <experiments>2</experiments>
</comment>
<comment type="interaction">
    <interactant intactId="EBI-515315">
        <id>P06241</id>
    </interactant>
    <interactant intactId="EBI-495538">
        <id>P48023</id>
        <label>FASLG</label>
    </interactant>
    <organismsDiffer>false</organismsDiffer>
    <experiments>2</experiments>
</comment>
<comment type="interaction">
    <interactant intactId="EBI-515315">
        <id>P06241</id>
    </interactant>
    <interactant intactId="EBI-3946257">
        <id>P36888</id>
        <label>FLT3</label>
    </interactant>
    <organismsDiffer>false</organismsDiffer>
    <experiments>2</experiments>
</comment>
<comment type="interaction">
    <interactant intactId="EBI-515315">
        <id>P06241</id>
    </interactant>
    <interactant intactId="EBI-7133890">
        <id>P02751-7</id>
        <label>FN1</label>
    </interactant>
    <organismsDiffer>false</organismsDiffer>
    <experiments>2</experiments>
</comment>
<comment type="interaction">
    <interactant intactId="EBI-515315">
        <id>P06241</id>
    </interactant>
    <interactant intactId="EBI-1753267">
        <id>O15117</id>
        <label>FYB1</label>
    </interactant>
    <organismsDiffer>false</organismsDiffer>
    <experiments>4</experiments>
</comment>
<comment type="interaction">
    <interactant intactId="EBI-515315">
        <id>P06241</id>
    </interactant>
    <interactant intactId="EBI-515315">
        <id>P06241</id>
        <label>FYN</label>
    </interactant>
    <organismsDiffer>false</organismsDiffer>
    <experiments>3</experiments>
</comment>
<comment type="interaction">
    <interactant intactId="EBI-515315">
        <id>P06241</id>
    </interactant>
    <interactant intactId="EBI-354056">
        <id>P04406</id>
        <label>GAPDH</label>
    </interactant>
    <organismsDiffer>false</organismsDiffer>
    <experiments>3</experiments>
</comment>
<comment type="interaction">
    <interactant intactId="EBI-515315">
        <id>P06241</id>
    </interactant>
    <interactant intactId="EBI-515278">
        <id>Q9HCN6</id>
        <label>GP6</label>
    </interactant>
    <organismsDiffer>false</organismsDiffer>
    <experiments>2</experiments>
</comment>
<comment type="interaction">
    <interactant intactId="EBI-515315">
        <id>P06241</id>
    </interactant>
    <interactant intactId="EBI-15816577">
        <id>Q9HCN6-1</id>
        <label>GP6</label>
    </interactant>
    <organismsDiffer>false</organismsDiffer>
    <experiments>2</experiments>
</comment>
<comment type="interaction">
    <interactant intactId="EBI-515315">
        <id>P06241</id>
    </interactant>
    <interactant intactId="EBI-712096">
        <id>P30519</id>
        <label>HMOX2</label>
    </interactant>
    <organismsDiffer>false</organismsDiffer>
    <experiments>3</experiments>
</comment>
<comment type="interaction">
    <interactant intactId="EBI-515315">
        <id>P06241</id>
    </interactant>
    <interactant intactId="EBI-296047">
        <id>P07900</id>
        <label>HSP90AA1</label>
    </interactant>
    <organismsDiffer>false</organismsDiffer>
    <experiments>8</experiments>
</comment>
<comment type="interaction">
    <interactant intactId="EBI-515315">
        <id>P06241</id>
    </interactant>
    <interactant intactId="EBI-352572">
        <id>P08238</id>
        <label>HSP90AB1</label>
    </interactant>
    <organismsDiffer>false</organismsDiffer>
    <experiments>5</experiments>
</comment>
<comment type="interaction">
    <interactant intactId="EBI-515315">
        <id>P06241</id>
    </interactant>
    <interactant intactId="EBI-1182222">
        <id>P50406</id>
        <label>HTR6</label>
    </interactant>
    <organismsDiffer>false</organismsDiffer>
    <experiments>7</experiments>
</comment>
<comment type="interaction">
    <interactant intactId="EBI-515315">
        <id>P06241</id>
    </interactant>
    <interactant intactId="EBI-1364">
        <id>Q07666</id>
        <label>KHDRBS1</label>
    </interactant>
    <organismsDiffer>false</organismsDiffer>
    <experiments>7</experiments>
</comment>
<comment type="interaction">
    <interactant intactId="EBI-515315">
        <id>P06241</id>
    </interactant>
    <interactant intactId="EBI-21591415">
        <id>P13473-2</id>
        <label>LAMP2</label>
    </interactant>
    <organismsDiffer>false</organismsDiffer>
    <experiments>3</experiments>
</comment>
<comment type="interaction">
    <interactant intactId="EBI-515315">
        <id>P06241</id>
    </interactant>
    <interactant intactId="EBI-881">
        <id>Q92918</id>
        <label>MAP4K1</label>
    </interactant>
    <organismsDiffer>false</organismsDiffer>
    <experiments>2</experiments>
</comment>
<comment type="interaction">
    <interactant intactId="EBI-515315">
        <id>P06241</id>
    </interactant>
    <interactant intactId="EBI-366182">
        <id>P10636</id>
        <label>MAPT</label>
    </interactant>
    <organismsDiffer>false</organismsDiffer>
    <experiments>3</experiments>
</comment>
<comment type="interaction">
    <interactant intactId="EBI-515315">
        <id>P06241</id>
    </interactant>
    <interactant intactId="EBI-7796412">
        <id>P10636-2</id>
        <label>MAPT</label>
    </interactant>
    <organismsDiffer>false</organismsDiffer>
    <experiments>2</experiments>
</comment>
<comment type="interaction">
    <interactant intactId="EBI-515315">
        <id>P06241</id>
    </interactant>
    <interactant intactId="EBI-21313635">
        <id>P10636-5</id>
        <label>MAPT</label>
    </interactant>
    <organismsDiffer>false</organismsDiffer>
    <experiments>2</experiments>
</comment>
<comment type="interaction">
    <interactant intactId="EBI-515315">
        <id>P06241</id>
    </interactant>
    <interactant intactId="EBI-7796455">
        <id>P10636-6</id>
        <label>MAPT</label>
    </interactant>
    <organismsDiffer>false</organismsDiffer>
    <experiments>3</experiments>
</comment>
<comment type="interaction">
    <interactant intactId="EBI-515315">
        <id>P06241</id>
    </interactant>
    <interactant intactId="EBI-366233">
        <id>P10636-8</id>
        <label>MAPT</label>
    </interactant>
    <organismsDiffer>false</organismsDiffer>
    <experiments>9</experiments>
</comment>
<comment type="interaction">
    <interactant intactId="EBI-515315">
        <id>P06241</id>
    </interactant>
    <interactant intactId="EBI-514199">
        <id>Q9H204</id>
        <label>MED28</label>
    </interactant>
    <organismsDiffer>false</organismsDiffer>
    <experiments>6</experiments>
</comment>
<comment type="interaction">
    <interactant intactId="EBI-515315">
        <id>P06241</id>
    </interactant>
    <interactant intactId="EBI-745080">
        <id>Q9NZQ3</id>
        <label>NCKIPSD</label>
    </interactant>
    <organismsDiffer>false</organismsDiffer>
    <experiments>2</experiments>
</comment>
<comment type="interaction">
    <interactant intactId="EBI-515315">
        <id>P06241</id>
    </interactant>
    <interactant intactId="EBI-347721">
        <id>Q8WX92</id>
        <label>NELFB</label>
    </interactant>
    <organismsDiffer>false</organismsDiffer>
    <experiments>2</experiments>
</comment>
<comment type="interaction">
    <interactant intactId="EBI-515315">
        <id>P06241</id>
    </interactant>
    <interactant intactId="EBI-2828115">
        <id>Q9NWQ8</id>
        <label>PAG1</label>
    </interactant>
    <organismsDiffer>false</organismsDiffer>
    <experiments>5</experiments>
</comment>
<comment type="interaction">
    <interactant intactId="EBI-515315">
        <id>P06241</id>
    </interactant>
    <interactant intactId="EBI-310624">
        <id>Q8WUM4</id>
        <label>PDCD6IP</label>
    </interactant>
    <organismsDiffer>false</organismsDiffer>
    <experiments>6</experiments>
</comment>
<comment type="interaction">
    <interactant intactId="EBI-515315">
        <id>P06241</id>
    </interactant>
    <interactant intactId="EBI-641237">
        <id>P09619</id>
        <label>PDGFRB</label>
    </interactant>
    <organismsDiffer>false</organismsDiffer>
    <experiments>3</experiments>
</comment>
<comment type="interaction">
    <interactant intactId="EBI-515315">
        <id>P06241</id>
    </interactant>
    <interactant intactId="EBI-712238">
        <id>P00491</id>
        <label>PNP</label>
    </interactant>
    <organismsDiffer>false</organismsDiffer>
    <experiments>3</experiments>
</comment>
<comment type="interaction">
    <interactant intactId="EBI-515315">
        <id>P06241</id>
    </interactant>
    <interactant intactId="EBI-1751761">
        <id>O43900</id>
        <label>PRICKLE3</label>
    </interactant>
    <organismsDiffer>false</organismsDiffer>
    <experiments>2</experiments>
</comment>
<comment type="interaction">
    <interactant intactId="EBI-515315">
        <id>P06241</id>
    </interactant>
    <interactant intactId="EBI-704279">
        <id>Q05655</id>
        <label>PRKCD</label>
    </interactant>
    <organismsDiffer>false</organismsDiffer>
    <experiments>5</experiments>
</comment>
<comment type="interaction">
    <interactant intactId="EBI-515315">
        <id>P06241</id>
    </interactant>
    <interactant intactId="EBI-374762">
        <id>Q04759</id>
        <label>PRKCQ</label>
    </interactant>
    <organismsDiffer>false</organismsDiffer>
    <experiments>7</experiments>
</comment>
<comment type="interaction">
    <interactant intactId="EBI-515315">
        <id>P06241</id>
    </interactant>
    <interactant intactId="EBI-998468">
        <id>Q9NZ42</id>
        <label>PSENEN</label>
    </interactant>
    <organismsDiffer>false</organismsDiffer>
    <experiments>3</experiments>
</comment>
<comment type="interaction">
    <interactant intactId="EBI-515315">
        <id>P06241</id>
    </interactant>
    <interactant intactId="EBI-702142">
        <id>Q05397</id>
        <label>PTK2</label>
    </interactant>
    <organismsDiffer>false</organismsDiffer>
    <experiments>3</experiments>
</comment>
<comment type="interaction">
    <interactant intactId="EBI-515315">
        <id>P06241</id>
    </interactant>
    <interactant intactId="EBI-298640">
        <id>Q14289</id>
        <label>PTK2B</label>
    </interactant>
    <organismsDiffer>false</organismsDiffer>
    <experiments>5</experiments>
</comment>
<comment type="interaction">
    <interactant intactId="EBI-515315">
        <id>P06241</id>
    </interactant>
    <interactant intactId="EBI-286642">
        <id>P62826</id>
        <label>RAN</label>
    </interactant>
    <organismsDiffer>false</organismsDiffer>
    <experiments>3</experiments>
</comment>
<comment type="interaction">
    <interactant intactId="EBI-515315">
        <id>P06241</id>
    </interactant>
    <interactant intactId="EBI-976876">
        <id>Q13905</id>
        <label>RAPGEF1</label>
    </interactant>
    <organismsDiffer>false</organismsDiffer>
    <experiments>2</experiments>
</comment>
<comment type="interaction">
    <interactant intactId="EBI-515315">
        <id>P06241</id>
    </interactant>
    <interactant intactId="EBI-1043236">
        <id>Q86UR5</id>
        <label>RIMS1</label>
    </interactant>
    <organismsDiffer>false</organismsDiffer>
    <experiments>2</experiments>
</comment>
<comment type="interaction">
    <interactant intactId="EBI-515315">
        <id>P06241</id>
    </interactant>
    <interactant intactId="EBI-985879">
        <id>P37840</id>
        <label>SNCA</label>
    </interactant>
    <organismsDiffer>false</organismsDiffer>
    <experiments>3</experiments>
</comment>
<comment type="interaction">
    <interactant intactId="EBI-515315">
        <id>P06241</id>
    </interactant>
    <interactant intactId="EBI-621482">
        <id>P12931</id>
        <label>SRC</label>
    </interactant>
    <organismsDiffer>false</organismsDiffer>
    <experiments>5</experiments>
</comment>
<comment type="interaction">
    <interactant intactId="EBI-515315">
        <id>P06241</id>
    </interactant>
    <interactant intactId="EBI-357085">
        <id>Q9UNE7</id>
        <label>STUB1</label>
    </interactant>
    <organismsDiffer>false</organismsDiffer>
    <experiments>3</experiments>
</comment>
<comment type="interaction">
    <interactant intactId="EBI-515315">
        <id>P06241</id>
    </interactant>
    <interactant intactId="EBI-25834258">
        <id>P13051-2</id>
        <label>UNG</label>
    </interactant>
    <organismsDiffer>false</organismsDiffer>
    <experiments>3</experiments>
</comment>
<comment type="interaction">
    <interactant intactId="EBI-515315">
        <id>P06241</id>
    </interactant>
    <interactant intactId="EBI-11141397">
        <id>Q9UBQ0-2</id>
        <label>VPS29</label>
    </interactant>
    <organismsDiffer>false</organismsDiffer>
    <experiments>3</experiments>
</comment>
<comment type="interaction">
    <interactant intactId="EBI-515315">
        <id>P06241</id>
    </interactant>
    <interactant intactId="EBI-714455">
        <id>Q9Y2W2</id>
        <label>WBP11</label>
    </interactant>
    <organismsDiffer>false</organismsDiffer>
    <experiments>3</experiments>
</comment>
<comment type="interaction">
    <interactant intactId="EBI-515315">
        <id>P06241</id>
    </interactant>
    <interactant intactId="EBI-26585631">
        <id>Q2GHU2</id>
        <label>ECH_0166</label>
    </interactant>
    <organismsDiffer>true</organismsDiffer>
    <experiments>4</experiments>
</comment>
<comment type="interaction">
    <interactant intactId="EBI-515315">
        <id>P06241</id>
    </interactant>
    <interactant intactId="EBI-8830305">
        <id>P31424-2</id>
        <label>Grm5</label>
    </interactant>
    <organismsDiffer>true</organismsDiffer>
    <experiments>2</experiments>
</comment>
<comment type="interaction">
    <interactant intactId="EBI-515315">
        <id>P06241</id>
    </interactant>
    <interactant intactId="EBI-11463802">
        <id>Q8BHK6</id>
        <label>Slamf7</label>
    </interactant>
    <organismsDiffer>true</organismsDiffer>
    <experiments>2</experiments>
</comment>
<comment type="interaction">
    <interactant intactId="EBI-515315">
        <id>P06241</id>
    </interactant>
    <interactant intactId="EBI-710506">
        <id>O92972</id>
    </interactant>
    <organismsDiffer>true</organismsDiffer>
    <experiments>2</experiments>
</comment>
<comment type="interaction">
    <interactant intactId="EBI-515315">
        <id>P06241</id>
    </interactant>
    <interactant intactId="EBI-706378">
        <id>P27958</id>
    </interactant>
    <organismsDiffer>true</organismsDiffer>
    <experiments>4</experiments>
</comment>
<comment type="interaction">
    <interactant intactId="EBI-515315">
        <id>P06241</id>
    </interactant>
    <interactant intactId="EBI-710918">
        <id>Q9WMX2</id>
    </interactant>
    <organismsDiffer>true</organismsDiffer>
    <experiments>2</experiments>
</comment>
<comment type="interaction">
    <interactant intactId="EBI-10691738">
        <id>P06241-3</id>
    </interactant>
    <interactant intactId="EBI-17264467">
        <id>P05067-2</id>
        <label>APP</label>
    </interactant>
    <organismsDiffer>false</organismsDiffer>
    <experiments>3</experiments>
</comment>
<comment type="interaction">
    <interactant intactId="EBI-10691738">
        <id>P06241-3</id>
    </interactant>
    <interactant intactId="EBI-930964">
        <id>P54253</id>
        <label>ATXN1</label>
    </interactant>
    <organismsDiffer>false</organismsDiffer>
    <experiments>6</experiments>
</comment>
<comment type="interaction">
    <interactant intactId="EBI-10691738">
        <id>P06241-3</id>
    </interactant>
    <interactant intactId="EBI-946046">
        <id>P54252</id>
        <label>ATXN3</label>
    </interactant>
    <organismsDiffer>false</organismsDiffer>
    <experiments>3</experiments>
</comment>
<comment type="interaction">
    <interactant intactId="EBI-10691738">
        <id>P06241-3</id>
    </interactant>
    <interactant intactId="EBI-2949658">
        <id>O95429</id>
        <label>BAG4</label>
    </interactant>
    <organismsDiffer>false</organismsDiffer>
    <experiments>3</experiments>
</comment>
<comment type="interaction">
    <interactant intactId="EBI-10691738">
        <id>P06241-3</id>
    </interactant>
    <interactant intactId="EBI-10988864">
        <id>P46379-2</id>
        <label>BAG6</label>
    </interactant>
    <organismsDiffer>false</organismsDiffer>
    <experiments>3</experiments>
</comment>
<comment type="interaction">
    <interactant intactId="EBI-10691738">
        <id>P06241-3</id>
    </interactant>
    <interactant intactId="EBI-702093">
        <id>P56945</id>
        <label>BCAR1</label>
    </interactant>
    <organismsDiffer>false</organismsDiffer>
    <experiments>3</experiments>
</comment>
<comment type="interaction">
    <interactant intactId="EBI-10691738">
        <id>P06241-3</id>
    </interactant>
    <interactant intactId="EBI-744027">
        <id>Q13191</id>
        <label>CBLB</label>
    </interactant>
    <organismsDiffer>false</organismsDiffer>
    <experiments>4</experiments>
</comment>
<comment type="interaction">
    <interactant intactId="EBI-10691738">
        <id>P06241-3</id>
    </interactant>
    <interactant intactId="EBI-12000556">
        <id>Q9Y2H0-1</id>
        <label>DLGAP4</label>
    </interactant>
    <organismsDiffer>false</organismsDiffer>
    <experiments>3</experiments>
</comment>
<comment type="interaction">
    <interactant intactId="EBI-10691738">
        <id>P06241-3</id>
    </interactant>
    <interactant intactId="EBI-395638">
        <id>O14645</id>
        <label>DNALI1</label>
    </interactant>
    <organismsDiffer>false</organismsDiffer>
    <experiments>3</experiments>
</comment>
<comment type="interaction">
    <interactant intactId="EBI-10691738">
        <id>P06241-3</id>
    </interactant>
    <interactant intactId="EBI-10968534">
        <id>P50570-2</id>
        <label>DNM2</label>
    </interactant>
    <organismsDiffer>false</organismsDiffer>
    <experiments>3</experiments>
</comment>
<comment type="interaction">
    <interactant intactId="EBI-10691738">
        <id>P06241-3</id>
    </interactant>
    <interactant intactId="EBI-2340258">
        <id>Q8N9I9</id>
        <label>DTX3</label>
    </interactant>
    <organismsDiffer>false</organismsDiffer>
    <experiments>4</experiments>
</comment>
<comment type="interaction">
    <interactant intactId="EBI-10691738">
        <id>P06241-3</id>
    </interactant>
    <interactant intactId="EBI-11525448">
        <id>O43281-2</id>
        <label>EFS</label>
    </interactant>
    <organismsDiffer>false</organismsDiffer>
    <experiments>5</experiments>
</comment>
<comment type="interaction">
    <interactant intactId="EBI-10691738">
        <id>P06241-3</id>
    </interactant>
    <interactant intactId="EBI-2941912">
        <id>Q9UJM3</id>
        <label>ERRFI1</label>
    </interactant>
    <organismsDiffer>false</organismsDiffer>
    <experiments>3</experiments>
</comment>
<comment type="interaction">
    <interactant intactId="EBI-10691738">
        <id>P06241-3</id>
    </interactant>
    <interactant intactId="EBI-6658203">
        <id>Q86YD7</id>
        <label>FAM90A1</label>
    </interactant>
    <organismsDiffer>false</organismsDiffer>
    <experiments>3</experiments>
</comment>
<comment type="interaction">
    <interactant intactId="EBI-10691738">
        <id>P06241-3</id>
    </interactant>
    <interactant intactId="EBI-744302">
        <id>P14136</id>
        <label>GFAP</label>
    </interactant>
    <organismsDiffer>false</organismsDiffer>
    <experiments>3</experiments>
</comment>
<comment type="interaction">
    <interactant intactId="EBI-10691738">
        <id>P06241-3</id>
    </interactant>
    <interactant intactId="EBI-1955541">
        <id>Q53GS7</id>
        <label>GLE1</label>
    </interactant>
    <organismsDiffer>false</organismsDiffer>
    <experiments>3</experiments>
</comment>
<comment type="interaction">
    <interactant intactId="EBI-10691738">
        <id>P06241-3</id>
    </interactant>
    <interactant intactId="EBI-466029">
        <id>P42858</id>
        <label>HTT</label>
    </interactant>
    <organismsDiffer>false</organismsDiffer>
    <experiments>12</experiments>
</comment>
<comment type="interaction">
    <interactant intactId="EBI-10691738">
        <id>P06241-3</id>
    </interactant>
    <interactant intactId="EBI-1055254">
        <id>Q8WXH2</id>
        <label>JPH3</label>
    </interactant>
    <organismsDiffer>false</organismsDiffer>
    <experiments>3</experiments>
</comment>
<comment type="interaction">
    <interactant intactId="EBI-10691738">
        <id>P06241-3</id>
    </interactant>
    <interactant intactId="EBI-948266">
        <id>O14901</id>
        <label>KLF11</label>
    </interactant>
    <organismsDiffer>false</organismsDiffer>
    <experiments>3</experiments>
</comment>
<comment type="interaction">
    <interactant intactId="EBI-10691738">
        <id>P06241-3</id>
    </interactant>
    <interactant intactId="EBI-16439278">
        <id>Q6FHY5</id>
        <label>MEOX2</label>
    </interactant>
    <organismsDiffer>false</organismsDiffer>
    <experiments>3</experiments>
</comment>
<comment type="interaction">
    <interactant intactId="EBI-10691738">
        <id>P06241-3</id>
    </interactant>
    <interactant intactId="EBI-713665">
        <id>P19404</id>
        <label>NDUFV2</label>
    </interactant>
    <organismsDiffer>false</organismsDiffer>
    <experiments>3</experiments>
</comment>
<comment type="interaction">
    <interactant intactId="EBI-10691738">
        <id>P06241-3</id>
    </interactant>
    <interactant intactId="EBI-1164361">
        <id>Q99497</id>
        <label>PARK7</label>
    </interactant>
    <organismsDiffer>false</organismsDiffer>
    <experiments>3</experiments>
</comment>
<comment type="interaction">
    <interactant intactId="EBI-10691738">
        <id>P06241-3</id>
    </interactant>
    <interactant intactId="EBI-395421">
        <id>Q16637</id>
        <label>SMN2</label>
    </interactant>
    <organismsDiffer>false</organismsDiffer>
    <experiments>3</experiments>
</comment>
<comment type="interaction">
    <interactant intactId="EBI-10691738">
        <id>P06241-3</id>
    </interactant>
    <interactant intactId="EBI-985879">
        <id>P37840</id>
        <label>SNCA</label>
    </interactant>
    <organismsDiffer>false</organismsDiffer>
    <experiments>3</experiments>
</comment>
<comment type="interaction">
    <interactant intactId="EBI-10691738">
        <id>P06241-3</id>
    </interactant>
    <interactant intactId="EBI-5235340">
        <id>Q7Z699</id>
        <label>SPRED1</label>
    </interactant>
    <organismsDiffer>false</organismsDiffer>
    <experiments>3</experiments>
</comment>
<comment type="interaction">
    <interactant intactId="EBI-10691738">
        <id>P06241-3</id>
    </interactant>
    <interactant intactId="EBI-743128">
        <id>P14927</id>
        <label>UQCRB</label>
    </interactant>
    <organismsDiffer>false</organismsDiffer>
    <experiments>3</experiments>
</comment>
<comment type="subcellular location">
    <subcellularLocation>
        <location evidence="24 44">Cytoplasm</location>
    </subcellularLocation>
    <subcellularLocation>
        <location evidence="24">Nucleus</location>
    </subcellularLocation>
    <subcellularLocation>
        <location evidence="16 44">Cell membrane</location>
    </subcellularLocation>
    <subcellularLocation>
        <location evidence="3">Perikaryon</location>
    </subcellularLocation>
    <text evidence="16 44">Present and active in lipid rafts (PubMed:12218089). Palmitoylation is crucial for proper trafficking (PubMed:8206991).</text>
</comment>
<comment type="alternative products">
    <event type="alternative splicing"/>
    <isoform>
        <id>P06241-1</id>
        <name>1</name>
        <name>B</name>
        <sequence type="displayed"/>
    </isoform>
    <isoform>
        <id>P06241-2</id>
        <name>2</name>
        <name>T</name>
        <sequence type="described" ref="VSP_024110"/>
    </isoform>
    <isoform>
        <id>P06241-3</id>
        <name>3</name>
        <sequence type="described" ref="VSP_024108"/>
    </isoform>
</comment>
<comment type="tissue specificity">
    <text evidence="9">Isoform 1 is highly expressed in the brain. Isoform 2 is expressed in cells of hemopoietic lineages, especially T-lymphocytes.</text>
</comment>
<comment type="PTM">
    <text evidence="2 9 22 24 29 40">Autophosphorylated at Tyr-420 (By similarity). Phosphorylation on the C-terminal tail at Tyr-531 by CSK maintains the enzyme in an inactive state (PubMed:1699196). PTPRC/CD45 dephosphorylates Tyr-531 leading to activation (PubMed:1533589). Ultraviolet B (UVB) strongly increase phosphorylation at Thr-12 and kinase activity, and promotes translocation from the cytoplasm to the nucleus (PubMed:15537652). Dephosphorylation at Tyr-420 by PTPN2 negatively regulates T-cell receptor signaling (PubMed:22080863). Phosphorylated at tyrosine residues, which can be enhanced by NTN1 (By similarity).</text>
</comment>
<comment type="PTM">
    <text evidence="2">Palmitoylated. Palmitoylation at Cys-3 and Cys-6, probably by ZDHHC21, regulates subcellular location.</text>
</comment>
<comment type="similarity">
    <text evidence="4">Belongs to the protein kinase superfamily. Tyr protein kinase family. SRC subfamily.</text>
</comment>
<proteinExistence type="evidence at protein level"/>
<gene>
    <name type="primary">FYN</name>
</gene>
<reference key="1">
    <citation type="journal article" date="1986" name="Mol. Cell. Biol.">
        <title>Isolation and oncogenic potential of a novel human src-like gene.</title>
        <authorList>
            <person name="Kawakami T."/>
            <person name="Pennington C.Y."/>
            <person name="Robbins K.C."/>
        </authorList>
    </citation>
    <scope>NUCLEOTIDE SEQUENCE [MRNA] (ISOFORM 1)</scope>
</reference>
<reference key="2">
    <citation type="journal article" date="1986" name="Proc. Natl. Acad. Sci. U.S.A.">
        <title>Yes-related protooncogene, syn, belongs to the protein-tyrosine kinase family.</title>
        <authorList>
            <person name="Semba K."/>
            <person name="Nishizawa M."/>
            <person name="Miyajima N."/>
            <person name="Yoshida M.C."/>
            <person name="Sukegawa J."/>
            <person name="Yamanashi Y."/>
            <person name="Sasaki M."/>
            <person name="Yamamoto T."/>
            <person name="Toyoshima K."/>
        </authorList>
    </citation>
    <scope>NUCLEOTIDE SEQUENCE [MRNA] (ISOFORM 1)</scope>
    <source>
        <tissue>Placenta</tissue>
    </source>
</reference>
<reference key="3">
    <citation type="journal article" date="1995" name="J. Immunol.">
        <title>Human p59fyn(T) regulates OKT3-induced calcium influx by a mechanism distinct from PIP2 hydrolysis in Jurkat T cells.</title>
        <authorList>
            <person name="Rigley K."/>
            <person name="Slocombe P."/>
            <person name="Proudfoot K."/>
            <person name="Wahid S."/>
            <person name="Mandair K."/>
            <person name="Bebbington C."/>
        </authorList>
    </citation>
    <scope>NUCLEOTIDE SEQUENCE [MRNA] (ISOFORM 2)</scope>
    <scope>FUNCTION</scope>
    <source>
        <tissue>T-cell</tissue>
    </source>
</reference>
<reference key="4">
    <citation type="journal article" date="2008" name="Nat. Methods">
        <title>Human protein factory for converting the transcriptome into an in vitro-expressed proteome.</title>
        <authorList>
            <person name="Goshima N."/>
            <person name="Kawamura Y."/>
            <person name="Fukumoto A."/>
            <person name="Miura A."/>
            <person name="Honma R."/>
            <person name="Satoh R."/>
            <person name="Wakamatsu A."/>
            <person name="Yamamoto J."/>
            <person name="Kimura K."/>
            <person name="Nishikawa T."/>
            <person name="Andoh T."/>
            <person name="Iida Y."/>
            <person name="Ishikawa K."/>
            <person name="Ito E."/>
            <person name="Kagawa N."/>
            <person name="Kaminaga C."/>
            <person name="Kanehori K."/>
            <person name="Kawakami B."/>
            <person name="Kenmochi K."/>
            <person name="Kimura R."/>
            <person name="Kobayashi M."/>
            <person name="Kuroita T."/>
            <person name="Kuwayama H."/>
            <person name="Maruyama Y."/>
            <person name="Matsuo K."/>
            <person name="Minami K."/>
            <person name="Mitsubori M."/>
            <person name="Mori M."/>
            <person name="Morishita R."/>
            <person name="Murase A."/>
            <person name="Nishikawa A."/>
            <person name="Nishikawa S."/>
            <person name="Okamoto T."/>
            <person name="Sakagami N."/>
            <person name="Sakamoto Y."/>
            <person name="Sasaki Y."/>
            <person name="Seki T."/>
            <person name="Sono S."/>
            <person name="Sugiyama A."/>
            <person name="Sumiya T."/>
            <person name="Takayama T."/>
            <person name="Takayama Y."/>
            <person name="Takeda H."/>
            <person name="Togashi T."/>
            <person name="Yahata K."/>
            <person name="Yamada H."/>
            <person name="Yanagisawa Y."/>
            <person name="Endo Y."/>
            <person name="Imamoto F."/>
            <person name="Kisu Y."/>
            <person name="Tanaka S."/>
            <person name="Isogai T."/>
            <person name="Imai J."/>
            <person name="Watanabe S."/>
            <person name="Nomura N."/>
        </authorList>
    </citation>
    <scope>NUCLEOTIDE SEQUENCE [LARGE SCALE MRNA] (ISOFORM 1)</scope>
</reference>
<reference key="5">
    <citation type="journal article" date="2003" name="Nature">
        <title>The DNA sequence and analysis of human chromosome 6.</title>
        <authorList>
            <person name="Mungall A.J."/>
            <person name="Palmer S.A."/>
            <person name="Sims S.K."/>
            <person name="Edwards C.A."/>
            <person name="Ashurst J.L."/>
            <person name="Wilming L."/>
            <person name="Jones M.C."/>
            <person name="Horton R."/>
            <person name="Hunt S.E."/>
            <person name="Scott C.E."/>
            <person name="Gilbert J.G.R."/>
            <person name="Clamp M.E."/>
            <person name="Bethel G."/>
            <person name="Milne S."/>
            <person name="Ainscough R."/>
            <person name="Almeida J.P."/>
            <person name="Ambrose K.D."/>
            <person name="Andrews T.D."/>
            <person name="Ashwell R.I.S."/>
            <person name="Babbage A.K."/>
            <person name="Bagguley C.L."/>
            <person name="Bailey J."/>
            <person name="Banerjee R."/>
            <person name="Barker D.J."/>
            <person name="Barlow K.F."/>
            <person name="Bates K."/>
            <person name="Beare D.M."/>
            <person name="Beasley H."/>
            <person name="Beasley O."/>
            <person name="Bird C.P."/>
            <person name="Blakey S.E."/>
            <person name="Bray-Allen S."/>
            <person name="Brook J."/>
            <person name="Brown A.J."/>
            <person name="Brown J.Y."/>
            <person name="Burford D.C."/>
            <person name="Burrill W."/>
            <person name="Burton J."/>
            <person name="Carder C."/>
            <person name="Carter N.P."/>
            <person name="Chapman J.C."/>
            <person name="Clark S.Y."/>
            <person name="Clark G."/>
            <person name="Clee C.M."/>
            <person name="Clegg S."/>
            <person name="Cobley V."/>
            <person name="Collier R.E."/>
            <person name="Collins J.E."/>
            <person name="Colman L.K."/>
            <person name="Corby N.R."/>
            <person name="Coville G.J."/>
            <person name="Culley K.M."/>
            <person name="Dhami P."/>
            <person name="Davies J."/>
            <person name="Dunn M."/>
            <person name="Earthrowl M.E."/>
            <person name="Ellington A.E."/>
            <person name="Evans K.A."/>
            <person name="Faulkner L."/>
            <person name="Francis M.D."/>
            <person name="Frankish A."/>
            <person name="Frankland J."/>
            <person name="French L."/>
            <person name="Garner P."/>
            <person name="Garnett J."/>
            <person name="Ghori M.J."/>
            <person name="Gilby L.M."/>
            <person name="Gillson C.J."/>
            <person name="Glithero R.J."/>
            <person name="Grafham D.V."/>
            <person name="Grant M."/>
            <person name="Gribble S."/>
            <person name="Griffiths C."/>
            <person name="Griffiths M.N.D."/>
            <person name="Hall R."/>
            <person name="Halls K.S."/>
            <person name="Hammond S."/>
            <person name="Harley J.L."/>
            <person name="Hart E.A."/>
            <person name="Heath P.D."/>
            <person name="Heathcott R."/>
            <person name="Holmes S.J."/>
            <person name="Howden P.J."/>
            <person name="Howe K.L."/>
            <person name="Howell G.R."/>
            <person name="Huckle E."/>
            <person name="Humphray S.J."/>
            <person name="Humphries M.D."/>
            <person name="Hunt A.R."/>
            <person name="Johnson C.M."/>
            <person name="Joy A.A."/>
            <person name="Kay M."/>
            <person name="Keenan S.J."/>
            <person name="Kimberley A.M."/>
            <person name="King A."/>
            <person name="Laird G.K."/>
            <person name="Langford C."/>
            <person name="Lawlor S."/>
            <person name="Leongamornlert D.A."/>
            <person name="Leversha M."/>
            <person name="Lloyd C.R."/>
            <person name="Lloyd D.M."/>
            <person name="Loveland J.E."/>
            <person name="Lovell J."/>
            <person name="Martin S."/>
            <person name="Mashreghi-Mohammadi M."/>
            <person name="Maslen G.L."/>
            <person name="Matthews L."/>
            <person name="McCann O.T."/>
            <person name="McLaren S.J."/>
            <person name="McLay K."/>
            <person name="McMurray A."/>
            <person name="Moore M.J.F."/>
            <person name="Mullikin J.C."/>
            <person name="Niblett D."/>
            <person name="Nickerson T."/>
            <person name="Novik K.L."/>
            <person name="Oliver K."/>
            <person name="Overton-Larty E.K."/>
            <person name="Parker A."/>
            <person name="Patel R."/>
            <person name="Pearce A.V."/>
            <person name="Peck A.I."/>
            <person name="Phillimore B.J.C.T."/>
            <person name="Phillips S."/>
            <person name="Plumb R.W."/>
            <person name="Porter K.M."/>
            <person name="Ramsey Y."/>
            <person name="Ranby S.A."/>
            <person name="Rice C.M."/>
            <person name="Ross M.T."/>
            <person name="Searle S.M."/>
            <person name="Sehra H.K."/>
            <person name="Sheridan E."/>
            <person name="Skuce C.D."/>
            <person name="Smith S."/>
            <person name="Smith M."/>
            <person name="Spraggon L."/>
            <person name="Squares S.L."/>
            <person name="Steward C.A."/>
            <person name="Sycamore N."/>
            <person name="Tamlyn-Hall G."/>
            <person name="Tester J."/>
            <person name="Theaker A.J."/>
            <person name="Thomas D.W."/>
            <person name="Thorpe A."/>
            <person name="Tracey A."/>
            <person name="Tromans A."/>
            <person name="Tubby B."/>
            <person name="Wall M."/>
            <person name="Wallis J.M."/>
            <person name="West A.P."/>
            <person name="White S.S."/>
            <person name="Whitehead S.L."/>
            <person name="Whittaker H."/>
            <person name="Wild A."/>
            <person name="Willey D.J."/>
            <person name="Wilmer T.E."/>
            <person name="Wood J.M."/>
            <person name="Wray P.W."/>
            <person name="Wyatt J.C."/>
            <person name="Young L."/>
            <person name="Younger R.M."/>
            <person name="Bentley D.R."/>
            <person name="Coulson A."/>
            <person name="Durbin R.M."/>
            <person name="Hubbard T."/>
            <person name="Sulston J.E."/>
            <person name="Dunham I."/>
            <person name="Rogers J."/>
            <person name="Beck S."/>
        </authorList>
    </citation>
    <scope>NUCLEOTIDE SEQUENCE [LARGE SCALE GENOMIC DNA]</scope>
</reference>
<reference key="6">
    <citation type="submission" date="2005-09" db="EMBL/GenBank/DDBJ databases">
        <authorList>
            <person name="Mural R.J."/>
            <person name="Istrail S."/>
            <person name="Sutton G.G."/>
            <person name="Florea L."/>
            <person name="Halpern A.L."/>
            <person name="Mobarry C.M."/>
            <person name="Lippert R."/>
            <person name="Walenz B."/>
            <person name="Shatkay H."/>
            <person name="Dew I."/>
            <person name="Miller J.R."/>
            <person name="Flanigan M.J."/>
            <person name="Edwards N.J."/>
            <person name="Bolanos R."/>
            <person name="Fasulo D."/>
            <person name="Halldorsson B.V."/>
            <person name="Hannenhalli S."/>
            <person name="Turner R."/>
            <person name="Yooseph S."/>
            <person name="Lu F."/>
            <person name="Nusskern D.R."/>
            <person name="Shue B.C."/>
            <person name="Zheng X.H."/>
            <person name="Zhong F."/>
            <person name="Delcher A.L."/>
            <person name="Huson D.H."/>
            <person name="Kravitz S.A."/>
            <person name="Mouchard L."/>
            <person name="Reinert K."/>
            <person name="Remington K.A."/>
            <person name="Clark A.G."/>
            <person name="Waterman M.S."/>
            <person name="Eichler E.E."/>
            <person name="Adams M.D."/>
            <person name="Hunkapiller M.W."/>
            <person name="Myers E.W."/>
            <person name="Venter J.C."/>
        </authorList>
    </citation>
    <scope>NUCLEOTIDE SEQUENCE [LARGE SCALE GENOMIC DNA]</scope>
</reference>
<reference key="7">
    <citation type="journal article" date="2004" name="Genome Res.">
        <title>The status, quality, and expansion of the NIH full-length cDNA project: the Mammalian Gene Collection (MGC).</title>
        <authorList>
            <consortium name="The MGC Project Team"/>
        </authorList>
    </citation>
    <scope>NUCLEOTIDE SEQUENCE [LARGE SCALE MRNA] (ISOFORM 3)</scope>
    <source>
        <tissue>Blood</tissue>
    </source>
</reference>
<reference key="8">
    <citation type="journal article" date="1990" name="Oncogene">
        <title>In vivo phosphorylation and membrane association of the fyn proto-oncogene product in IM-9 human lymphoblasts.</title>
        <authorList>
            <person name="Peters D.J."/>
            <person name="McGrew B.R."/>
            <person name="Perron D.C."/>
            <person name="Liptak L.M."/>
            <person name="Laudano A.P."/>
        </authorList>
    </citation>
    <scope>MYRISTOYLATION AT GLY-2</scope>
    <scope>PHOSPHORYLATION AT TYR-531</scope>
    <scope>ACTIVITY REGULATION</scope>
</reference>
<reference key="9">
    <citation type="journal article" date="1992" name="Eur. J. Immunol.">
        <title>Regulation of the p59fyn protein tyrosine kinase by the CD45 phosphotyrosine phosphatase.</title>
        <authorList>
            <person name="Mustelin T."/>
            <person name="Pessa-Morikawa T."/>
            <person name="Autero M."/>
            <person name="Gassmann M."/>
            <person name="Andersson L.C."/>
            <person name="Gahmberg C.G."/>
            <person name="Burn P."/>
        </authorList>
    </citation>
    <scope>DEPHOSPHORYLATION AT TYR-531 BY PTPRC</scope>
</reference>
<reference key="10">
    <citation type="journal article" date="1993" name="Proc. Natl. Acad. Sci. U.S.A.">
        <title>Src-homology 3 domain of protein kinase p59fyn mediates binding to phosphatidylinositol 3-kinase in T cells.</title>
        <authorList>
            <person name="Prasad K.V."/>
            <person name="Janssen O."/>
            <person name="Kapeller R."/>
            <person name="Raab M."/>
            <person name="Cantley L.C."/>
            <person name="Rudd C.E."/>
        </authorList>
    </citation>
    <scope>INTERACTION WITH PIK3R1</scope>
</reference>
<reference key="11">
    <citation type="journal article" date="1994" name="J. Biol. Chem.">
        <title>Dual myristylation and palmitylation of Src family member p59fyn affects subcellular localization.</title>
        <authorList>
            <person name="Alland L."/>
            <person name="Peseckis S.M."/>
            <person name="Atherton R.E."/>
            <person name="Berthiaume L."/>
            <person name="Resh M.D."/>
        </authorList>
    </citation>
    <scope>PALMITOYLATION</scope>
</reference>
<reference key="12">
    <citation type="journal article" date="1995" name="Proc. Natl. Acad. Sci. U.S.A.">
        <title>p56Lck and p59Fyn regulate CD28 binding to phosphatidylinositol 3-kinase, growth factor receptor-bound protein GRB-2, and T cell-specific protein-tyrosine kinase ITK: implications for T-cell costimulation.</title>
        <authorList>
            <person name="Raab M."/>
            <person name="Cai Y.C."/>
            <person name="Bunnell S.C."/>
            <person name="Heyeck S.D."/>
            <person name="Berg L.J."/>
            <person name="Rudd C.E."/>
        </authorList>
    </citation>
    <scope>FUNCTION IN PHOSPHORYLATION OF CD28</scope>
    <scope>CATALYTIC ACTIVITY</scope>
</reference>
<reference key="13">
    <citation type="journal article" date="1997" name="J. Biol. Chem.">
        <title>Direct association of Csk homologous kinase (CHK) with the diphosphorylated site Tyr568/570 of the activated c-KIT in megakaryocytes.</title>
        <authorList>
            <person name="Price D.J."/>
            <person name="Rivnay B."/>
            <person name="Fu Y."/>
            <person name="Jiang S."/>
            <person name="Avraham S."/>
            <person name="Avraham H."/>
        </authorList>
    </citation>
    <scope>INTERACTION WITH KIT</scope>
</reference>
<reference key="14">
    <citation type="journal article" date="1997" name="J. Biol. Chem.">
        <title>Tyrosine phosphorylation of Crk-associated substrates by focal adhesion kinase. A putative mechanism for the integrin-mediated tyrosine phosphorylation of Crk-associated substrates.</title>
        <authorList>
            <person name="Tachibana K."/>
            <person name="Urano T."/>
            <person name="Fujita H."/>
            <person name="Ohashi Y."/>
            <person name="Kamiguchi K."/>
            <person name="Iwata S."/>
            <person name="Hirai H."/>
            <person name="Morimoto C."/>
        </authorList>
    </citation>
    <scope>INTERACTION WITH NEDD9</scope>
</reference>
<reference key="15">
    <citation type="journal article" date="1997" name="Proc. Natl. Acad. Sci. U.S.A.">
        <title>Cloning of a novel T-cell protein FYB that binds FYN and SH2-domain-containing leukocyte protein 76 and modulates interleukin 2 production.</title>
        <authorList>
            <person name="da Silva A.J."/>
            <person name="Li Z."/>
            <person name="de Vera C."/>
            <person name="Canto E."/>
            <person name="Findell P."/>
            <person name="Rudd C.E."/>
        </authorList>
    </citation>
    <scope>INTERACTION WITH FYB1</scope>
    <source>
        <tissue>Tonsil</tissue>
    </source>
</reference>
<reference key="16">
    <citation type="journal article" date="1998" name="Cell">
        <title>A requirement for caveolin-1 and associated kinase Fyn in integrin signaling and anchorage-dependent cell growth.</title>
        <authorList>
            <person name="Wary K.K."/>
            <person name="Mariotti A."/>
            <person name="Zurzolo C."/>
            <person name="Giancotti F.G."/>
        </authorList>
    </citation>
    <scope>INTERACTION WITH CAV1</scope>
</reference>
<reference key="17">
    <citation type="journal article" date="1999" name="J. Virol.">
        <title>Altered expression of tyrosine kinases of the Src and Syk families in human T-cell leukemia virus type 1-infected T-cell lines.</title>
        <authorList>
            <person name="Weil R."/>
            <person name="Levraud J.P."/>
            <person name="Dodon M.D."/>
            <person name="Bessia C."/>
            <person name="Hazan U."/>
            <person name="Kourilsky P."/>
            <person name="Israel A."/>
        </authorList>
    </citation>
    <scope>TISSUE SPECIFICITY</scope>
    <scope>PHOSPHORYLATION</scope>
    <scope>ALTERNATIVE SPLICING</scope>
</reference>
<reference key="18">
    <citation type="journal article" date="1999" name="Oncogene">
        <title>Phosphorylation at Tyr-838 in the kinase domain of EphA8 modulates Fyn binding to the Tyr-615 site by enhancing tyrosine kinase activity.</title>
        <authorList>
            <person name="Choi S."/>
            <person name="Park S."/>
        </authorList>
    </citation>
    <scope>INTERACTION WITH EPHA8</scope>
</reference>
<reference key="19">
    <citation type="journal article" date="2000" name="J. Exp. Med.">
        <title>Phosphoprotein associated with glycosphingolipid-enriched microdomains (PAG), a novel ubiquitously expressed transmembrane adaptor protein, binds the protein tyrosine kinase csk and is involved in regulation of T cell activation.</title>
        <authorList>
            <person name="Brdicka T."/>
            <person name="Pavlistova D."/>
            <person name="Bruyns E."/>
            <person name="Leo A."/>
            <person name="Korinek V."/>
            <person name="Angelisova P."/>
            <person name="Scherer J."/>
            <person name="Shevchenko A."/>
            <person name="Shevchenko A."/>
            <person name="Hilgert I."/>
            <person name="Cerny J."/>
            <person name="Drbal K."/>
            <person name="Kuramitsu Y."/>
            <person name="Horejsi V."/>
            <person name="Schraven B."/>
        </authorList>
    </citation>
    <scope>INTERACTION WITH PAG1</scope>
</reference>
<reference key="20">
    <citation type="journal article" date="2000" name="Proc. Natl. Acad. Sci. U.S.A.">
        <title>T-cell receptor antagonists induce Vav phosphorylation by selective activation of Fyn kinase.</title>
        <authorList>
            <person name="Huang J."/>
            <person name="Tilly D."/>
            <person name="Altman A."/>
            <person name="Sugie K."/>
            <person name="Grey H.M."/>
        </authorList>
    </citation>
    <scope>FUNCTION IN PHOSPHORYLATION OF VAV1</scope>
    <scope>CATALYTIC ACTIVITY</scope>
</reference>
<reference key="21">
    <citation type="journal article" date="2001" name="Biochem. Biophys. Res. Commun.">
        <title>Activated Fyn phosphorylates alpha-synuclein at tyrosine residue 125.</title>
        <authorList>
            <person name="Nakamura T."/>
            <person name="Yamashita H."/>
            <person name="Takahashi T."/>
            <person name="Nakamura S."/>
        </authorList>
    </citation>
    <scope>FUNCTION IN PHOSPHORYLATION OF SNCA</scope>
    <scope>CATALYTIC ACTIVITY</scope>
</reference>
<reference key="22">
    <citation type="journal article" date="2001" name="J. Biol. Chem.">
        <title>The ORF3 protein of hepatitis E virus binds to Src homology 3 domains and activates MAPK.</title>
        <authorList>
            <person name="Korkaya H."/>
            <person name="Jameel S."/>
            <person name="Gupta D."/>
            <person name="Tyagi S."/>
            <person name="Kumar R."/>
            <person name="Zafrullah M."/>
            <person name="Mazumdar M."/>
            <person name="Lal S.K."/>
            <person name="Xiaofang L."/>
            <person name="Sehgal D."/>
            <person name="Das S.R."/>
            <person name="Sahal D."/>
        </authorList>
    </citation>
    <scope>INTERACTION WITH HEV ORF3 PROTEIN (MICROBIAL INFECTION)</scope>
</reference>
<reference key="23">
    <citation type="journal article" date="2001" name="J. Neurobiol.">
        <title>Tyrosine phosphorylation of p190 RhoGAP by Fyn regulates oligodendrocyte differentiation.</title>
        <authorList>
            <person name="Wolf R.M."/>
            <person name="Wilkes J.J."/>
            <person name="Chao M.V."/>
            <person name="Resh M.D."/>
        </authorList>
    </citation>
    <scope>FUNCTION</scope>
</reference>
<reference key="24">
    <citation type="journal article" date="2002" name="J. Immunol.">
        <title>Fyn is essential for tyrosine phosphorylation of Csk-binding protein/phosphoprotein associated with glycolipid-enriched microdomains in lipid rafts in resting T cells.</title>
        <authorList>
            <person name="Yasuda K."/>
            <person name="Nagafuku M."/>
            <person name="Shima T."/>
            <person name="Okada M."/>
            <person name="Yagi T."/>
            <person name="Yamada T."/>
            <person name="Minaki Y."/>
            <person name="Kato A."/>
            <person name="Tani-Ichi S."/>
            <person name="Hamaoka T."/>
            <person name="Kosugi A."/>
        </authorList>
    </citation>
    <scope>SUBCELLULAR LOCATION</scope>
</reference>
<reference key="25">
    <citation type="journal article" date="2003" name="Biochem. Biophys. Res. Commun.">
        <title>p250GAP, a neural RhoGAP protein, is associated with and phosphorylated by Fyn.</title>
        <authorList>
            <person name="Taniguchi S."/>
            <person name="Liu H."/>
            <person name="Nakazawa T."/>
            <person name="Yokoyama K."/>
            <person name="Tezuka T."/>
            <person name="Yamamoto T."/>
        </authorList>
    </citation>
    <scope>FUNCTION IN PHOSPHORYLATION OF ARHGAP32</scope>
    <scope>CATALYTIC ACTIVITY</scope>
</reference>
<reference key="26">
    <citation type="journal article" date="2004" name="J. Biol. Chem.">
        <title>Regulation of TRPC6 channel activity by tyrosine phosphorylation.</title>
        <authorList>
            <person name="Hisatsune C."/>
            <person name="Kuroda Y."/>
            <person name="Nakamura K."/>
            <person name="Inoue T."/>
            <person name="Nakamura T."/>
            <person name="Michikawa T."/>
            <person name="Mizutani A."/>
            <person name="Mikoshiba K."/>
        </authorList>
    </citation>
    <scope>FUNCTION IN PHOSPHORYLATION OF TRPC6</scope>
    <scope>CATALYTIC ACTIVITY</scope>
</reference>
<reference key="27">
    <citation type="journal article" date="2004" name="J. Cell Biol.">
        <title>Phosphorylation of DCC by Fyn mediates Netrin-1 signaling in growth cone guidance.</title>
        <authorList>
            <person name="Meriane M."/>
            <person name="Tcherkezian J."/>
            <person name="Webber C.A."/>
            <person name="Danek E.I."/>
            <person name="Triki I."/>
            <person name="McFarlane S."/>
            <person name="Bloch-Gallego E."/>
            <person name="Lamarche-Vane N."/>
        </authorList>
    </citation>
    <scope>FUNCTION</scope>
</reference>
<reference key="28">
    <citation type="journal article" date="2004" name="J. Exp. Med.">
        <title>Fyn and PTP-PEST-mediated regulation of Wiskott-Aldrich syndrome protein (WASp) tyrosine phosphorylation is required for coupling T cell antigen receptor engagement to WASp effector function and T cell activation.</title>
        <authorList>
            <person name="Badour K."/>
            <person name="Zhang J."/>
            <person name="Shi F."/>
            <person name="Leng Y."/>
            <person name="Collins M."/>
            <person name="Siminovitch K.A."/>
        </authorList>
    </citation>
    <scope>FUNCTION IN PHOSPHORYLATION OF WAS</scope>
    <scope>CATALYTIC ACTIVITY</scope>
</reference>
<reference key="29">
    <citation type="journal article" date="2004" name="J. Exp. Med.">
        <title>Unc119, a novel activator of Lck/Fyn, is essential for T cell activation.</title>
        <authorList>
            <person name="Gorska M.M."/>
            <person name="Stafford S.J."/>
            <person name="Cen O."/>
            <person name="Sur S."/>
            <person name="Alam R."/>
        </authorList>
    </citation>
    <scope>INTERACTION WITH UNC119</scope>
</reference>
<reference key="30">
    <citation type="journal article" date="2004" name="Oncogene">
        <title>Function of the Src-family kinases, Lck and Fyn, in T-cell development and activation.</title>
        <authorList>
            <person name="Palacios E.H."/>
            <person name="Weiss A."/>
        </authorList>
    </citation>
    <scope>REVIEW ON FUNCTION</scope>
</reference>
<reference key="31">
    <citation type="journal article" date="2005" name="Blood">
        <title>Molecular basis for positive and negative signaling by the natural killer cell receptor 2B4 (CD244).</title>
        <authorList>
            <person name="Eissmann P."/>
            <person name="Beauchamp L."/>
            <person name="Wooters J."/>
            <person name="Tilton J.C."/>
            <person name="Long E.O."/>
            <person name="Watzl C."/>
        </authorList>
    </citation>
    <scope>FUNCTION</scope>
</reference>
<reference key="32">
    <citation type="journal article" date="2005" name="J. Biol. Chem.">
        <title>Fyn phosphorylates human MAP-2c on tyrosine 67.</title>
        <authorList>
            <person name="Zamora-Leon S.P."/>
            <person name="Bresnick A."/>
            <person name="Backer J.M."/>
            <person name="Shafit-Zagardo B."/>
        </authorList>
    </citation>
    <scope>FUNCTION IN PHOSPHORYLATION OF MAP2</scope>
    <scope>CATALYTIC ACTIVITY</scope>
</reference>
<reference key="33">
    <citation type="journal article" date="2005" name="J. Biol. Chem.">
        <title>Regulation of ultraviolet B-induced phosphorylation of histone H3 at serine 10 by Fyn kinase.</title>
        <authorList>
            <person name="He Z."/>
            <person name="Cho Y.Y."/>
            <person name="Ma W.Y."/>
            <person name="Choi H.S."/>
            <person name="Bode A.M."/>
            <person name="Dong Z."/>
        </authorList>
    </citation>
    <scope>PHOSPHORYLATION AT THR-12</scope>
    <scope>SUBCELLULAR LOCATION</scope>
</reference>
<reference key="34">
    <citation type="journal article" date="2006" name="Mol. Cell">
        <title>Negative regulation of the E3 ubiquitin ligase itch via Fyn-mediated tyrosine phosphorylation.</title>
        <authorList>
            <person name="Yang C."/>
            <person name="Zhou W."/>
            <person name="Jeon M.S."/>
            <person name="Demydenko D."/>
            <person name="Harada Y."/>
            <person name="Zhou H."/>
            <person name="Liu Y.C."/>
        </authorList>
    </citation>
    <scope>INTERACTION WITH ITCH</scope>
    <scope>FUNCTION</scope>
</reference>
<reference key="35">
    <citation type="journal article" date="2007" name="Cell Death Differ.">
        <title>Src-family tyrosine kinase fyn phosphorylates phosphatidylinositol 3-kinase enhancer-activating Akt, preventing its apoptotic cleavage and promoting cell survival.</title>
        <authorList>
            <person name="Tang X."/>
            <person name="Feng Y."/>
            <person name="Ye K."/>
        </authorList>
    </citation>
    <scope>FUNCTION IN PHOSPHORYLATION OF AGAP2</scope>
    <scope>CATALYTIC ACTIVITY</scope>
</reference>
<reference key="36">
    <citation type="journal article" date="2007" name="J. Biol. Chem.">
        <title>Regulation of protein arginine methyltransferase 8 (PRMT8) activity by its N-terminal domain.</title>
        <authorList>
            <person name="Sayegh J."/>
            <person name="Webb K."/>
            <person name="Cheng D."/>
            <person name="Bedford M.T."/>
            <person name="Clarke S.G."/>
        </authorList>
    </citation>
    <scope>INTERACTION WITH PRMT8</scope>
</reference>
<reference key="37">
    <citation type="journal article" date="2007" name="Mol. Cell. Biol.">
        <title>Specific phosphorylation of p120-catenin regulatory domain differently modulates its binding to RhoA.</title>
        <authorList>
            <person name="Castano J."/>
            <person name="Solanas G."/>
            <person name="Casagolda D."/>
            <person name="Raurell I."/>
            <person name="Villagrasa P."/>
            <person name="Bustelo X.R."/>
            <person name="Garcia de Herreros A."/>
            <person name="Dunach M."/>
        </authorList>
    </citation>
    <scope>FUNCTION IN PHOSPHORYLATION OF CTNND1</scope>
    <scope>CATALYTIC ACTIVITY</scope>
</reference>
<reference key="38">
    <citation type="journal article" date="2008" name="J. Biol. Chem.">
        <title>Regulation of FynT function by dual domain docking on PAG/Cbp.</title>
        <authorList>
            <person name="Solheim S.A."/>
            <person name="Torgersen K.M."/>
            <person name="Tasken K."/>
            <person name="Berge T."/>
        </authorList>
    </citation>
    <scope>FUNCTION IN PHOSPHORYLATION OF PAG1</scope>
    <scope>CATALYTIC ACTIVITY</scope>
</reference>
<reference key="39">
    <citation type="journal article" date="2008" name="J. Biol. Chem.">
        <title>Neph1, a component of the kidney slit diaphragm, is tyrosine-phosphorylated by the Src family tyrosine kinase and modulates intracellular signaling by binding to Grb2.</title>
        <authorList>
            <person name="Harita Y."/>
            <person name="Kurihara H."/>
            <person name="Kosako H."/>
            <person name="Tezuka T."/>
            <person name="Sekine T."/>
            <person name="Igarashi T."/>
            <person name="Hattori S."/>
        </authorList>
    </citation>
    <scope>FUNCTION IN PHOSPHORYLATION OF KIRREL1</scope>
    <scope>CATALYTIC ACTIVITY</scope>
</reference>
<reference key="40">
    <citation type="journal article" date="2008" name="J. Proteome Res.">
        <title>Phosphoproteome of resting human platelets.</title>
        <authorList>
            <person name="Zahedi R.P."/>
            <person name="Lewandrowski U."/>
            <person name="Wiesner J."/>
            <person name="Wortelkamp S."/>
            <person name="Moebius J."/>
            <person name="Schuetz C."/>
            <person name="Walter U."/>
            <person name="Gambaryan S."/>
            <person name="Sickmann A."/>
        </authorList>
    </citation>
    <scope>PHOSPHORYLATION [LARGE SCALE ANALYSIS] AT SER-21</scope>
    <scope>IDENTIFICATION BY MASS SPECTROMETRY [LARGE SCALE ANALYSIS]</scope>
    <source>
        <tissue>Platelet</tissue>
    </source>
</reference>
<reference key="41">
    <citation type="journal article" date="2008" name="Mol. Cell">
        <title>Kinase-selective enrichment enables quantitative phosphoproteomics of the kinome across the cell cycle.</title>
        <authorList>
            <person name="Daub H."/>
            <person name="Olsen J.V."/>
            <person name="Bairlein M."/>
            <person name="Gnad F."/>
            <person name="Oppermann F.S."/>
            <person name="Korner R."/>
            <person name="Greff Z."/>
            <person name="Keri G."/>
            <person name="Stemmann O."/>
            <person name="Mann M."/>
        </authorList>
    </citation>
    <scope>PHOSPHORYLATION [LARGE SCALE ANALYSIS] AT SER-21 AND TYR-531</scope>
    <scope>IDENTIFICATION BY MASS SPECTROMETRY [LARGE SCALE ANALYSIS]</scope>
    <source>
        <tissue>Cervix carcinoma</tissue>
    </source>
</reference>
<reference key="42">
    <citation type="journal article" date="2008" name="Proc. Natl. Acad. Sci. U.S.A.">
        <title>A quantitative atlas of mitotic phosphorylation.</title>
        <authorList>
            <person name="Dephoure N."/>
            <person name="Zhou C."/>
            <person name="Villen J."/>
            <person name="Beausoleil S.A."/>
            <person name="Bakalarski C.E."/>
            <person name="Elledge S.J."/>
            <person name="Gygi S.P."/>
        </authorList>
    </citation>
    <scope>PHOSPHORYLATION [LARGE SCALE ANALYSIS] AT SER-21</scope>
    <scope>IDENTIFICATION BY MASS SPECTROMETRY [LARGE SCALE ANALYSIS]</scope>
    <source>
        <tissue>Cervix carcinoma</tissue>
    </source>
</reference>
<reference key="43">
    <citation type="journal article" date="2009" name="BMC Immunol.">
        <title>Identification of SH3 domain interaction partners of human FasL (CD178) by phage display screening.</title>
        <authorList>
            <person name="Voss M."/>
            <person name="Lettau M."/>
            <person name="Janssen O."/>
        </authorList>
    </citation>
    <scope>INTERACTION WITH FASLG</scope>
</reference>
<reference key="44">
    <citation type="journal article" date="2009" name="J. Biol. Chem.">
        <title>Phosphorylation of nephrin triggers Ca2+ signaling by recruitment and activation of phospholipase C-{gamma}1.</title>
        <authorList>
            <person name="Harita Y."/>
            <person name="Kurihara H."/>
            <person name="Kosako H."/>
            <person name="Tezuka T."/>
            <person name="Sekine T."/>
            <person name="Igarashi T."/>
            <person name="Ohsawa I."/>
            <person name="Ohta S."/>
            <person name="Hattori S."/>
        </authorList>
    </citation>
    <scope>FUNCTION IN PHOSPHORYLATION OF NPHS1</scope>
    <scope>CATALYTIC ACTIVITY</scope>
</reference>
<reference key="45">
    <citation type="journal article" date="2009" name="J. Biol. Chem.">
        <title>Semaphorin3A signaling mediated by Fyn-dependent tyrosine phosphorylation of collapsin response mediator protein 2 at tyrosine 32.</title>
        <authorList>
            <person name="Uchida Y."/>
            <person name="Ohshima T."/>
            <person name="Yamashita N."/>
            <person name="Ogawara M."/>
            <person name="Sasaki Y."/>
            <person name="Nakamura F."/>
            <person name="Goshima Y."/>
        </authorList>
    </citation>
    <scope>FUNCTION IN PHOSPHORYLATION OF DPYSL2</scope>
    <scope>CATALYTIC ACTIVITY</scope>
</reference>
<reference key="46">
    <citation type="journal article" date="2009" name="Mol. Cell. Proteomics">
        <title>Large-scale proteomics analysis of the human kinome.</title>
        <authorList>
            <person name="Oppermann F.S."/>
            <person name="Gnad F."/>
            <person name="Olsen J.V."/>
            <person name="Hornberger R."/>
            <person name="Greff Z."/>
            <person name="Keri G."/>
            <person name="Mann M."/>
            <person name="Daub H."/>
        </authorList>
    </citation>
    <scope>PHOSPHORYLATION [LARGE SCALE ANALYSIS] AT SER-21</scope>
    <scope>IDENTIFICATION BY MASS SPECTROMETRY [LARGE SCALE ANALYSIS]</scope>
</reference>
<reference key="47">
    <citation type="journal article" date="2010" name="J. Leukoc. Biol.">
        <title>The T cell receptor-mediated phosphorylation of Pyk2 tyrosines 402 and 580 occurs via a distinct mechanism than other receptor systems.</title>
        <authorList>
            <person name="Collins M."/>
            <person name="Tremblay M."/>
            <person name="Chapman N."/>
            <person name="Curtiss M."/>
            <person name="Rothman P.B."/>
            <person name="Houtman J.C."/>
        </authorList>
    </citation>
    <scope>FUNCTION IN PTK2B/PYK2 PHOSPHORYLATION</scope>
</reference>
<reference key="48">
    <citation type="journal article" date="2010" name="J. Biol. Chem.">
        <title>Src kinase phosphorylates RUNX3 at tyrosine residues and localizes the protein in the cytoplasm.</title>
        <authorList>
            <person name="Goh Y.M."/>
            <person name="Cinghu S."/>
            <person name="Hong E.T."/>
            <person name="Lee Y.S."/>
            <person name="Kim J.H."/>
            <person name="Jang J.W."/>
            <person name="Li Y.H."/>
            <person name="Chi X.Z."/>
            <person name="Lee K.S."/>
            <person name="Wee H."/>
            <person name="Ito Y."/>
            <person name="Oh B.C."/>
            <person name="Bae S.C."/>
        </authorList>
    </citation>
    <scope>FUNCTION</scope>
    <scope>INTERACTION WITH RUNX3</scope>
</reference>
<reference key="49">
    <citation type="journal article" date="2010" name="Sci. Signal.">
        <title>Quantitative phosphoproteomics reveals widespread full phosphorylation site occupancy during mitosis.</title>
        <authorList>
            <person name="Olsen J.V."/>
            <person name="Vermeulen M."/>
            <person name="Santamaria A."/>
            <person name="Kumar C."/>
            <person name="Miller M.L."/>
            <person name="Jensen L.J."/>
            <person name="Gnad F."/>
            <person name="Cox J."/>
            <person name="Jensen T.S."/>
            <person name="Nigg E.A."/>
            <person name="Brunak S."/>
            <person name="Mann M."/>
        </authorList>
    </citation>
    <scope>PHOSPHORYLATION [LARGE SCALE ANALYSIS] AT SER-21</scope>
    <scope>IDENTIFICATION BY MASS SPECTROMETRY [LARGE SCALE ANALYSIS]</scope>
    <source>
        <tissue>Cervix carcinoma</tissue>
    </source>
</reference>
<reference key="50">
    <citation type="journal article" date="2011" name="J. Clin. Invest.">
        <title>T cell protein tyrosine phosphatase attenuates T cell signaling to maintain tolerance in mice.</title>
        <authorList>
            <person name="Wiede F."/>
            <person name="Shields B.J."/>
            <person name="Chew S.H."/>
            <person name="Kyparissoudis K."/>
            <person name="van Vliet C."/>
            <person name="Galic S."/>
            <person name="Tremblay M.L."/>
            <person name="Russell S.M."/>
            <person name="Godfrey D.I."/>
            <person name="Tiganis T."/>
        </authorList>
    </citation>
    <scope>FUNCTION IN TCR SIGNALING</scope>
    <scope>PHOSPHORYLATION</scope>
    <scope>DEPHOSPHORYLATION AT TYR-420 BY PTPN2</scope>
</reference>
<reference key="51">
    <citation type="journal article" date="2013" name="J. Proteome Res.">
        <title>Toward a comprehensive characterization of a human cancer cell phosphoproteome.</title>
        <authorList>
            <person name="Zhou H."/>
            <person name="Di Palma S."/>
            <person name="Preisinger C."/>
            <person name="Peng M."/>
            <person name="Polat A.N."/>
            <person name="Heck A.J."/>
            <person name="Mohammed S."/>
        </authorList>
    </citation>
    <scope>PHOSPHORYLATION [LARGE SCALE ANALYSIS] AT SER-21 AND SER-26</scope>
    <scope>IDENTIFICATION BY MASS SPECTROMETRY [LARGE SCALE ANALYSIS]</scope>
    <source>
        <tissue>Cervix carcinoma</tissue>
        <tissue>Erythroleukemia</tissue>
    </source>
</reference>
<reference key="52">
    <citation type="journal article" date="2016" name="J. Immunol.">
        <title>ARAP, a novel adaptor protein, is required for TCR signaling and integrin-mediated adhesion.</title>
        <authorList>
            <person name="Jung S.H."/>
            <person name="Yoo E.H."/>
            <person name="Yu M.J."/>
            <person name="Song H.M."/>
            <person name="Kang H.Y."/>
            <person name="Cho J.Y."/>
            <person name="Lee J.R."/>
        </authorList>
    </citation>
    <scope>INTERACTION WITH FYB2 AND FYB1</scope>
</reference>
<reference key="53">
    <citation type="journal article" date="1993" name="EMBO J.">
        <title>Crystal structure of the SH3 domain in human Fyn; comparison of the three-dimensional structures of SH3 domains in tyrosine kinases and spectrin.</title>
        <authorList>
            <person name="Noble M.E.M."/>
            <person name="Musacchio A."/>
            <person name="Saraste M."/>
            <person name="Courtneidge S.A."/>
            <person name="Wierenga R.K."/>
        </authorList>
    </citation>
    <scope>X-RAY CRYSTALLOGRAPHY (1.9 ANGSTROMS) OF SH3 DOMAIN</scope>
</reference>
<reference key="54">
    <citation type="journal article" date="1994" name="Nat. Struct. Biol.">
        <title>High-resolution crystal structures of tyrosine kinase SH3 domains complexed with proline-rich peptides.</title>
        <authorList>
            <person name="Musacchio A."/>
            <person name="Saraste M."/>
            <person name="Wilmanns M."/>
        </authorList>
    </citation>
    <scope>X-RAY CRYSTALLOGRAPHY (2.3 ANGSTROMS) OF 81-142</scope>
</reference>
<reference key="55">
    <citation type="journal article" date="1996" name="Biochemistry">
        <title>Structural and thermodynamic characterization of the interaction of the SH3 domain from Fyn with the proline-rich binding site on the p85 subunit of PI3-kinase.</title>
        <authorList>
            <person name="Renzoni D.A."/>
            <person name="Pugh D.J."/>
            <person name="Siligardi G."/>
            <person name="Das P."/>
            <person name="Morton C.J."/>
            <person name="Rossi C."/>
            <person name="Waterfield M.D."/>
            <person name="Campbell I.D."/>
            <person name="Ladbury J.E."/>
        </authorList>
    </citation>
    <scope>STRUCTURE BY NMR</scope>
</reference>
<reference key="56">
    <citation type="journal article" date="1996" name="Cell">
        <title>Crystal structure of the conserved core of HIV-1 Nef complexed with a Src family SH3 domain.</title>
        <authorList>
            <person name="Lee C.H."/>
            <person name="Saksela K."/>
            <person name="Mirza U.A."/>
            <person name="Chait B.T."/>
            <person name="Kuriyan J."/>
        </authorList>
    </citation>
    <scope>X-RAY CRYSTALLOGRAPHY (2.5 ANGSTROMS) OF 85-141 IN COMPLEX WITH NEF</scope>
</reference>
<reference key="57">
    <citation type="journal article" date="1996" name="Structure">
        <title>Solution structure and peptide binding of the SH3 domain from human Fyn.</title>
        <authorList>
            <person name="Morton C.J."/>
            <person name="Pugh D.J.R."/>
            <person name="Brown E.L.J."/>
            <person name="Kahmann J.D."/>
            <person name="Renzoni D.A.C."/>
            <person name="Campbell I.D."/>
        </authorList>
    </citation>
    <scope>STRUCTURE BY NMR OF SH3 DOMAIN</scope>
</reference>
<reference key="58">
    <citation type="journal article" date="1997" name="Structure">
        <title>The SH2 domain from the tyrosine kinase Fyn in complex with a phosphotyrosyl peptide reveals insights into domain stability and binding specificity.</title>
        <authorList>
            <person name="Mulhern T.D."/>
            <person name="Shaw G.L."/>
            <person name="Morton C.J."/>
            <person name="Day A.J."/>
            <person name="Campbell I.D."/>
        </authorList>
    </citation>
    <scope>STRUCTURE BY NMR OF SH2 DOMAIN</scope>
</reference>
<reference key="59">
    <citation type="journal article" date="2003" name="Nat. Cell Biol.">
        <title>SAP couples Fyn to SLAM immune receptors.</title>
        <authorList>
            <person name="Chan B."/>
            <person name="Lanyi A."/>
            <person name="Song H.K."/>
            <person name="Griesbach J."/>
            <person name="Simarro-Grande M."/>
            <person name="Poy F."/>
            <person name="Howie D."/>
            <person name="Sumegi J."/>
            <person name="Terhorst C."/>
            <person name="Eck M.J."/>
        </authorList>
    </citation>
    <scope>X-RAY CRYSTALLOGRAPHY (2.5 ANGSTROMS) OF 84-144 IN COMPLEX WITH SLAMF1 AND SH2D1A</scope>
</reference>
<reference key="60">
    <citation type="journal article" date="2007" name="Nature">
        <title>Patterns of somatic mutation in human cancer genomes.</title>
        <authorList>
            <person name="Greenman C."/>
            <person name="Stephens P."/>
            <person name="Smith R."/>
            <person name="Dalgliesh G.L."/>
            <person name="Hunter C."/>
            <person name="Bignell G."/>
            <person name="Davies H."/>
            <person name="Teague J."/>
            <person name="Butler A."/>
            <person name="Stevens C."/>
            <person name="Edkins S."/>
            <person name="O'Meara S."/>
            <person name="Vastrik I."/>
            <person name="Schmidt E.E."/>
            <person name="Avis T."/>
            <person name="Barthorpe S."/>
            <person name="Bhamra G."/>
            <person name="Buck G."/>
            <person name="Choudhury B."/>
            <person name="Clements J."/>
            <person name="Cole J."/>
            <person name="Dicks E."/>
            <person name="Forbes S."/>
            <person name="Gray K."/>
            <person name="Halliday K."/>
            <person name="Harrison R."/>
            <person name="Hills K."/>
            <person name="Hinton J."/>
            <person name="Jenkinson A."/>
            <person name="Jones D."/>
            <person name="Menzies A."/>
            <person name="Mironenko T."/>
            <person name="Perry J."/>
            <person name="Raine K."/>
            <person name="Richardson D."/>
            <person name="Shepherd R."/>
            <person name="Small A."/>
            <person name="Tofts C."/>
            <person name="Varian J."/>
            <person name="Webb T."/>
            <person name="West S."/>
            <person name="Widaa S."/>
            <person name="Yates A."/>
            <person name="Cahill D.P."/>
            <person name="Louis D.N."/>
            <person name="Goldstraw P."/>
            <person name="Nicholson A.G."/>
            <person name="Brasseur F."/>
            <person name="Looijenga L."/>
            <person name="Weber B.L."/>
            <person name="Chiew Y.-E."/>
            <person name="DeFazio A."/>
            <person name="Greaves M.F."/>
            <person name="Green A.R."/>
            <person name="Campbell P."/>
            <person name="Birney E."/>
            <person name="Easton D.F."/>
            <person name="Chenevix-Trench G."/>
            <person name="Tan M.-H."/>
            <person name="Khoo S.K."/>
            <person name="Teh B.T."/>
            <person name="Yuen S.T."/>
            <person name="Leung S.Y."/>
            <person name="Wooster R."/>
            <person name="Futreal P.A."/>
            <person name="Stratton M.R."/>
        </authorList>
    </citation>
    <scope>VARIANTS [LARGE SCALE ANALYSIS] LEU-243; ARG-410 AND GLU-506</scope>
</reference>
<protein>
    <recommendedName>
        <fullName>Tyrosine-protein kinase Fyn</fullName>
        <ecNumber evidence="12 13 18 19 21 42">2.7.10.2</ecNumber>
    </recommendedName>
    <alternativeName>
        <fullName>Proto-oncogene Syn</fullName>
    </alternativeName>
    <alternativeName>
        <fullName>Proto-oncogene c-Fyn</fullName>
    </alternativeName>
    <alternativeName>
        <fullName>Src-like kinase</fullName>
        <shortName>SLK</shortName>
    </alternativeName>
    <alternativeName>
        <fullName>p59-Fyn</fullName>
    </alternativeName>
</protein>
<sequence length="537" mass="60762">MGCVQCKDKEATKLTEERDGSLNQSSGYRYGTDPTPQHYPSFGVTSIPNYNNFHAAGGQGLTVFGGVNSSSHTGTLRTRGGTGVTLFVALYDYEARTEDDLSFHKGEKFQILNSSEGDWWEARSLTTGETGYIPSNYVAPVDSIQAEEWYFGKLGRKDAERQLLSFGNPRGTFLIRESETTKGAYSLSIRDWDDMKGDHVKHYKIRKLDNGGYYITTRAQFETLQQLVQHYSERAAGLCCRLVVPCHKGMPRLTDLSVKTKDVWEIPRESLQLIKRLGNGQFGEVWMGTWNGNTKVAIKTLKPGTMSPESFLEEAQIMKKLKHDKLVQLYAVVSEEPIYIVTEYMNKGSLLDFLKDGEGRALKLPNLVDMAAQVAAGMAYIERMNYIHRDLRSANILVGNGLICKIADFGLARLIEDNEYTARQGAKFPIKWTAPEAALYGRFTIKSDVWSFGILLTELVTKGRVPYPGMNNREVLEQVERGYRMPCPQDCPISLHELMIHCWKKDPEERPTFEYLQSFLEDYFTATEPQYQPGENL</sequence>
<name>FYN_HUMAN</name>
<accession>P06241</accession>
<accession>B5BU57</accession>
<accession>E1P557</accession>
<accession>H0UI48</accession>
<accession>Q16248</accession>
<accession>Q5R3A6</accession>
<accession>Q5R3A7</accession>
<accession>Q8N5D7</accession>
<keyword id="KW-0002">3D-structure</keyword>
<keyword id="KW-1064">Adaptive immunity</keyword>
<keyword id="KW-0025">Alternative splicing</keyword>
<keyword id="KW-0067">ATP-binding</keyword>
<keyword id="KW-1003">Cell membrane</keyword>
<keyword id="KW-0963">Cytoplasm</keyword>
<keyword id="KW-0217">Developmental protein</keyword>
<keyword id="KW-0945">Host-virus interaction</keyword>
<keyword id="KW-0391">Immunity</keyword>
<keyword id="KW-0418">Kinase</keyword>
<keyword id="KW-0449">Lipoprotein</keyword>
<keyword id="KW-0464">Manganese</keyword>
<keyword id="KW-0472">Membrane</keyword>
<keyword id="KW-0479">Metal-binding</keyword>
<keyword id="KW-0519">Myristate</keyword>
<keyword id="KW-0547">Nucleotide-binding</keyword>
<keyword id="KW-0539">Nucleus</keyword>
<keyword id="KW-0564">Palmitate</keyword>
<keyword id="KW-0597">Phosphoprotein</keyword>
<keyword id="KW-1267">Proteomics identification</keyword>
<keyword id="KW-0656">Proto-oncogene</keyword>
<keyword id="KW-1185">Reference proteome</keyword>
<keyword id="KW-0727">SH2 domain</keyword>
<keyword id="KW-0728">SH3 domain</keyword>
<keyword id="KW-0808">Transferase</keyword>
<keyword id="KW-0829">Tyrosine-protein kinase</keyword>
<evidence type="ECO:0000250" key="1"/>
<evidence type="ECO:0000250" key="2">
    <source>
        <dbReference type="UniProtKB" id="P39688"/>
    </source>
</evidence>
<evidence type="ECO:0000250" key="3">
    <source>
        <dbReference type="UniProtKB" id="Q62844"/>
    </source>
</evidence>
<evidence type="ECO:0000255" key="4">
    <source>
        <dbReference type="PROSITE-ProRule" id="PRU00159"/>
    </source>
</evidence>
<evidence type="ECO:0000255" key="5">
    <source>
        <dbReference type="PROSITE-ProRule" id="PRU00191"/>
    </source>
</evidence>
<evidence type="ECO:0000255" key="6">
    <source>
        <dbReference type="PROSITE-ProRule" id="PRU00192"/>
    </source>
</evidence>
<evidence type="ECO:0000255" key="7">
    <source>
        <dbReference type="PROSITE-ProRule" id="PRU10028"/>
    </source>
</evidence>
<evidence type="ECO:0000256" key="8">
    <source>
        <dbReference type="SAM" id="MobiDB-lite"/>
    </source>
</evidence>
<evidence type="ECO:0000269" key="9">
    <source>
    </source>
</evidence>
<evidence type="ECO:0000269" key="10">
    <source>
    </source>
</evidence>
<evidence type="ECO:0000269" key="11">
    <source>
    </source>
</evidence>
<evidence type="ECO:0000269" key="12">
    <source>
    </source>
</evidence>
<evidence type="ECO:0000269" key="13">
    <source>
    </source>
</evidence>
<evidence type="ECO:0000269" key="14">
    <source>
    </source>
</evidence>
<evidence type="ECO:0000269" key="15">
    <source>
    </source>
</evidence>
<evidence type="ECO:0000269" key="16">
    <source>
    </source>
</evidence>
<evidence type="ECO:0000269" key="17">
    <source>
    </source>
</evidence>
<evidence type="ECO:0000269" key="18">
    <source>
    </source>
</evidence>
<evidence type="ECO:0000269" key="19">
    <source>
    </source>
</evidence>
<evidence type="ECO:0000269" key="20">
    <source>
    </source>
</evidence>
<evidence type="ECO:0000269" key="21">
    <source>
    </source>
</evidence>
<evidence type="ECO:0000269" key="22">
    <source>
    </source>
</evidence>
<evidence type="ECO:0000269" key="23">
    <source>
    </source>
</evidence>
<evidence type="ECO:0000269" key="24">
    <source>
    </source>
</evidence>
<evidence type="ECO:0000269" key="25">
    <source>
    </source>
</evidence>
<evidence type="ECO:0000269" key="26">
    <source>
    </source>
</evidence>
<evidence type="ECO:0000269" key="27">
    <source>
    </source>
</evidence>
<evidence type="ECO:0000269" key="28">
    <source>
    </source>
</evidence>
<evidence type="ECO:0000269" key="29">
    <source>
    </source>
</evidence>
<evidence type="ECO:0000269" key="30">
    <source>
    </source>
</evidence>
<evidence type="ECO:0000269" key="31">
    <source>
    </source>
</evidence>
<evidence type="ECO:0000269" key="32">
    <source>
    </source>
</evidence>
<evidence type="ECO:0000269" key="33">
    <source>
    </source>
</evidence>
<evidence type="ECO:0000269" key="34">
    <source>
    </source>
</evidence>
<evidence type="ECO:0000269" key="35">
    <source>
    </source>
</evidence>
<evidence type="ECO:0000269" key="36">
    <source>
    </source>
</evidence>
<evidence type="ECO:0000269" key="37">
    <source>
    </source>
</evidence>
<evidence type="ECO:0000269" key="38">
    <source>
    </source>
</evidence>
<evidence type="ECO:0000269" key="39">
    <source>
    </source>
</evidence>
<evidence type="ECO:0000269" key="40">
    <source>
    </source>
</evidence>
<evidence type="ECO:0000269" key="41">
    <source>
    </source>
</evidence>
<evidence type="ECO:0000269" key="42">
    <source>
    </source>
</evidence>
<evidence type="ECO:0000269" key="43">
    <source>
    </source>
</evidence>
<evidence type="ECO:0000269" key="44">
    <source>
    </source>
</evidence>
<evidence type="ECO:0000269" key="45">
    <source>
    </source>
</evidence>
<evidence type="ECO:0000269" key="46">
    <source>
    </source>
</evidence>
<evidence type="ECO:0000269" key="47">
    <source>
    </source>
</evidence>
<evidence type="ECO:0000269" key="48">
    <source>
    </source>
</evidence>
<evidence type="ECO:0000269" key="49">
    <source>
    </source>
</evidence>
<evidence type="ECO:0000269" key="50">
    <source>
    </source>
</evidence>
<evidence type="ECO:0000303" key="51">
    <source>
    </source>
</evidence>
<evidence type="ECO:0000303" key="52">
    <source>
    </source>
</evidence>
<evidence type="ECO:0000303" key="53">
    <source>
    </source>
</evidence>
<evidence type="ECO:0000305" key="54"/>
<evidence type="ECO:0007744" key="55">
    <source>
    </source>
</evidence>
<evidence type="ECO:0007744" key="56">
    <source>
    </source>
</evidence>
<evidence type="ECO:0007744" key="57">
    <source>
    </source>
</evidence>
<evidence type="ECO:0007744" key="58">
    <source>
    </source>
</evidence>
<evidence type="ECO:0007744" key="59">
    <source>
    </source>
</evidence>
<evidence type="ECO:0007744" key="60">
    <source>
    </source>
</evidence>
<evidence type="ECO:0007829" key="61">
    <source>
        <dbReference type="PDB" id="1AOT"/>
    </source>
</evidence>
<evidence type="ECO:0007829" key="62">
    <source>
        <dbReference type="PDB" id="1G83"/>
    </source>
</evidence>
<evidence type="ECO:0007829" key="63">
    <source>
        <dbReference type="PDB" id="2DQ7"/>
    </source>
</evidence>
<evidence type="ECO:0007829" key="64">
    <source>
        <dbReference type="PDB" id="4U1P"/>
    </source>
</evidence>
<evidence type="ECO:0007829" key="65">
    <source>
        <dbReference type="PDB" id="6IPY"/>
    </source>
</evidence>
<evidence type="ECO:0007829" key="66">
    <source>
        <dbReference type="PDB" id="7A2P"/>
    </source>
</evidence>
<organism>
    <name type="scientific">Homo sapiens</name>
    <name type="common">Human</name>
    <dbReference type="NCBI Taxonomy" id="9606"/>
    <lineage>
        <taxon>Eukaryota</taxon>
        <taxon>Metazoa</taxon>
        <taxon>Chordata</taxon>
        <taxon>Craniata</taxon>
        <taxon>Vertebrata</taxon>
        <taxon>Euteleostomi</taxon>
        <taxon>Mammalia</taxon>
        <taxon>Eutheria</taxon>
        <taxon>Euarchontoglires</taxon>
        <taxon>Primates</taxon>
        <taxon>Haplorrhini</taxon>
        <taxon>Catarrhini</taxon>
        <taxon>Hominidae</taxon>
        <taxon>Homo</taxon>
    </lineage>
</organism>